<keyword id="KW-0002">3D-structure</keyword>
<keyword id="KW-0007">Acetylation</keyword>
<keyword id="KW-0025">Alternative splicing</keyword>
<keyword id="KW-0051">Antiviral defense</keyword>
<keyword id="KW-0067">ATP-binding</keyword>
<keyword id="KW-0963">Cytoplasm</keyword>
<keyword id="KW-0903">Direct protein sequencing</keyword>
<keyword id="KW-0225">Disease variant</keyword>
<keyword id="KW-1023">Dystonia</keyword>
<keyword id="KW-0945">Host-virus interaction</keyword>
<keyword id="KW-0391">Immunity</keyword>
<keyword id="KW-0399">Innate immunity</keyword>
<keyword id="KW-1017">Isopeptide bond</keyword>
<keyword id="KW-0418">Kinase</keyword>
<keyword id="KW-0460">Magnesium</keyword>
<keyword id="KW-0547">Nucleotide-binding</keyword>
<keyword id="KW-0539">Nucleus</keyword>
<keyword id="KW-0597">Phosphoprotein</keyword>
<keyword id="KW-1267">Proteomics identification</keyword>
<keyword id="KW-1185">Reference proteome</keyword>
<keyword id="KW-0677">Repeat</keyword>
<keyword id="KW-0694">RNA-binding</keyword>
<keyword id="KW-0723">Serine/threonine-protein kinase</keyword>
<keyword id="KW-0804">Transcription</keyword>
<keyword id="KW-0805">Transcription regulation</keyword>
<keyword id="KW-0808">Transferase</keyword>
<keyword id="KW-0829">Tyrosine-protein kinase</keyword>
<keyword id="KW-0832">Ubl conjugation</keyword>
<evidence type="ECO:0000250" key="1">
    <source>
        <dbReference type="UniProtKB" id="Q03963"/>
    </source>
</evidence>
<evidence type="ECO:0000255" key="2">
    <source>
        <dbReference type="PROSITE-ProRule" id="PRU00159"/>
    </source>
</evidence>
<evidence type="ECO:0000255" key="3">
    <source>
        <dbReference type="PROSITE-ProRule" id="PRU00266"/>
    </source>
</evidence>
<evidence type="ECO:0000255" key="4">
    <source>
        <dbReference type="PROSITE-ProRule" id="PRU10027"/>
    </source>
</evidence>
<evidence type="ECO:0000256" key="5">
    <source>
        <dbReference type="SAM" id="MobiDB-lite"/>
    </source>
</evidence>
<evidence type="ECO:0000269" key="6">
    <source>
    </source>
</evidence>
<evidence type="ECO:0000269" key="7">
    <source>
    </source>
</evidence>
<evidence type="ECO:0000269" key="8">
    <source>
    </source>
</evidence>
<evidence type="ECO:0000269" key="9">
    <source>
    </source>
</evidence>
<evidence type="ECO:0000269" key="10">
    <source>
    </source>
</evidence>
<evidence type="ECO:0000269" key="11">
    <source>
    </source>
</evidence>
<evidence type="ECO:0000269" key="12">
    <source>
    </source>
</evidence>
<evidence type="ECO:0000269" key="13">
    <source>
    </source>
</evidence>
<evidence type="ECO:0000269" key="14">
    <source>
    </source>
</evidence>
<evidence type="ECO:0000269" key="15">
    <source>
    </source>
</evidence>
<evidence type="ECO:0000269" key="16">
    <source>
    </source>
</evidence>
<evidence type="ECO:0000269" key="17">
    <source>
    </source>
</evidence>
<evidence type="ECO:0000269" key="18">
    <source>
    </source>
</evidence>
<evidence type="ECO:0000269" key="19">
    <source>
    </source>
</evidence>
<evidence type="ECO:0000269" key="20">
    <source>
    </source>
</evidence>
<evidence type="ECO:0000269" key="21">
    <source>
    </source>
</evidence>
<evidence type="ECO:0000269" key="22">
    <source>
    </source>
</evidence>
<evidence type="ECO:0000269" key="23">
    <source>
    </source>
</evidence>
<evidence type="ECO:0000269" key="24">
    <source>
    </source>
</evidence>
<evidence type="ECO:0000269" key="25">
    <source>
    </source>
</evidence>
<evidence type="ECO:0000269" key="26">
    <source>
    </source>
</evidence>
<evidence type="ECO:0000269" key="27">
    <source>
    </source>
</evidence>
<evidence type="ECO:0000269" key="28">
    <source>
    </source>
</evidence>
<evidence type="ECO:0000269" key="29">
    <source>
    </source>
</evidence>
<evidence type="ECO:0000269" key="30">
    <source>
    </source>
</evidence>
<evidence type="ECO:0000269" key="31">
    <source>
    </source>
</evidence>
<evidence type="ECO:0000269" key="32">
    <source>
    </source>
</evidence>
<evidence type="ECO:0000269" key="33">
    <source>
    </source>
</evidence>
<evidence type="ECO:0000269" key="34">
    <source>
    </source>
</evidence>
<evidence type="ECO:0000269" key="35">
    <source>
    </source>
</evidence>
<evidence type="ECO:0000269" key="36">
    <source>
    </source>
</evidence>
<evidence type="ECO:0000269" key="37">
    <source>
    </source>
</evidence>
<evidence type="ECO:0000269" key="38">
    <source>
    </source>
</evidence>
<evidence type="ECO:0000269" key="39">
    <source>
    </source>
</evidence>
<evidence type="ECO:0000269" key="40">
    <source>
    </source>
</evidence>
<evidence type="ECO:0000269" key="41">
    <source>
    </source>
</evidence>
<evidence type="ECO:0000269" key="42">
    <source>
    </source>
</evidence>
<evidence type="ECO:0000269" key="43">
    <source>
    </source>
</evidence>
<evidence type="ECO:0000269" key="44">
    <source>
    </source>
</evidence>
<evidence type="ECO:0000269" key="45">
    <source>
    </source>
</evidence>
<evidence type="ECO:0000269" key="46">
    <source>
    </source>
</evidence>
<evidence type="ECO:0000269" key="47">
    <source>
    </source>
</evidence>
<evidence type="ECO:0000269" key="48">
    <source>
    </source>
</evidence>
<evidence type="ECO:0000269" key="49">
    <source>
    </source>
</evidence>
<evidence type="ECO:0000269" key="50">
    <source>
    </source>
</evidence>
<evidence type="ECO:0000269" key="51">
    <source>
    </source>
</evidence>
<evidence type="ECO:0000269" key="52">
    <source>
    </source>
</evidence>
<evidence type="ECO:0000269" key="53">
    <source>
    </source>
</evidence>
<evidence type="ECO:0000269" key="54">
    <source>
    </source>
</evidence>
<evidence type="ECO:0000269" key="55">
    <source>
    </source>
</evidence>
<evidence type="ECO:0000269" key="56">
    <source>
    </source>
</evidence>
<evidence type="ECO:0000269" key="57">
    <source>
    </source>
</evidence>
<evidence type="ECO:0000269" key="58">
    <source>
    </source>
</evidence>
<evidence type="ECO:0000269" key="59">
    <source>
    </source>
</evidence>
<evidence type="ECO:0000269" key="60">
    <source>
    </source>
</evidence>
<evidence type="ECO:0000269" key="61">
    <source>
    </source>
</evidence>
<evidence type="ECO:0000269" key="62">
    <source>
    </source>
</evidence>
<evidence type="ECO:0000269" key="63">
    <source>
    </source>
</evidence>
<evidence type="ECO:0000269" key="64">
    <source>
    </source>
</evidence>
<evidence type="ECO:0000269" key="65">
    <source>
    </source>
</evidence>
<evidence type="ECO:0000269" key="66">
    <source ref="13"/>
</evidence>
<evidence type="ECO:0000303" key="67">
    <source>
    </source>
</evidence>
<evidence type="ECO:0000303" key="68">
    <source>
    </source>
</evidence>
<evidence type="ECO:0000303" key="69">
    <source ref="7"/>
</evidence>
<evidence type="ECO:0000305" key="70"/>
<evidence type="ECO:0000305" key="71">
    <source>
    </source>
</evidence>
<evidence type="ECO:0000305" key="72">
    <source>
    </source>
</evidence>
<evidence type="ECO:0000305" key="73">
    <source>
    </source>
</evidence>
<evidence type="ECO:0007744" key="74">
    <source>
        <dbReference type="PDB" id="1QU6"/>
    </source>
</evidence>
<evidence type="ECO:0007744" key="75">
    <source>
        <dbReference type="PDB" id="2A19"/>
    </source>
</evidence>
<evidence type="ECO:0007744" key="76">
    <source>
        <dbReference type="PDB" id="2A1A"/>
    </source>
</evidence>
<evidence type="ECO:0007744" key="77">
    <source>
        <dbReference type="PDB" id="6D3K"/>
    </source>
</evidence>
<evidence type="ECO:0007744" key="78">
    <source>
        <dbReference type="PDB" id="6D3L"/>
    </source>
</evidence>
<evidence type="ECO:0007744" key="79">
    <source>
    </source>
</evidence>
<evidence type="ECO:0007744" key="80">
    <source>
    </source>
</evidence>
<evidence type="ECO:0007744" key="81">
    <source>
    </source>
</evidence>
<evidence type="ECO:0007744" key="82">
    <source>
    </source>
</evidence>
<evidence type="ECO:0007744" key="83">
    <source>
    </source>
</evidence>
<evidence type="ECO:0007744" key="84">
    <source>
    </source>
</evidence>
<evidence type="ECO:0007829" key="85">
    <source>
        <dbReference type="PDB" id="1QU6"/>
    </source>
</evidence>
<evidence type="ECO:0007829" key="86">
    <source>
        <dbReference type="PDB" id="2A19"/>
    </source>
</evidence>
<evidence type="ECO:0007829" key="87">
    <source>
        <dbReference type="PDB" id="2A1A"/>
    </source>
</evidence>
<evidence type="ECO:0007829" key="88">
    <source>
        <dbReference type="PDB" id="3UIU"/>
    </source>
</evidence>
<evidence type="ECO:0007829" key="89">
    <source>
        <dbReference type="PDB" id="6D3L"/>
    </source>
</evidence>
<proteinExistence type="evidence at protein level"/>
<comment type="function">
    <text evidence="1 7 12 14 15 27 29 30 31 32 33 34 36 38 39 40 41 42 43 44 45 46 47 49 50 56">IFN-induced dsRNA-dependent serine/threonine-protein kinase that phosphorylates the alpha subunit of eukaryotic translation initiation factor 2 (EIF2S1/eIF-2-alpha) and plays a key role in the innate immune response to viral infection (PubMed:18835251, PubMed:19189853, PubMed:19507191, PubMed:21072047, PubMed:21123651, PubMed:22381929, PubMed:22948139, PubMed:23229543). Inhibits viral replication via the integrated stress response (ISR): EIF2S1/eIF-2-alpha phosphorylation in response to viral infection converts EIF2S1/eIF-2-alpha in a global protein synthesis inhibitor, resulting to a shutdown of cellular and viral protein synthesis, while concomitantly initiating the preferential translation of ISR-specific mRNAs, such as the transcriptional activator ATF4 (PubMed:19189853, PubMed:21123651, PubMed:22948139, PubMed:23229543). Exerts its antiviral activity on a wide range of DNA and RNA viruses including hepatitis C virus (HCV), hepatitis B virus (HBV), measles virus (MV) and herpes simplex virus 1 (HHV-1) (PubMed:11836380, PubMed:19189853, PubMed:19840259, PubMed:20171114, PubMed:21710204, PubMed:23115276, PubMed:23399035). Also involved in the regulation of signal transduction, apoptosis, cell proliferation and differentiation: phosphorylates other substrates including p53/TP53, PPP2R5A, DHX9, ILF3, IRS1 and the HHV-1 viral protein US11 (PubMed:11836380, PubMed:19229320, PubMed:22214662). In addition to serine/threonine-protein kinase activity, also has tyrosine-protein kinase activity and phosphorylates CDK1 at 'Tyr-4' upon DNA damage, facilitating its ubiquitination and proteasomal degradation (PubMed:20395957). Either as an adapter protein and/or via its kinase activity, can regulate various signaling pathways (p38 MAP kinase, NF-kappa-B and insulin signaling pathways) and transcription factors (JUN, STAT1, STAT3, IRF1, ATF3) involved in the expression of genes encoding pro-inflammatory cytokines and IFNs (PubMed:22948139, PubMed:23084476, PubMed:23372823). Activates the NF-kappa-B pathway via interaction with IKBKB and TRAF family of proteins and activates the p38 MAP kinase pathway via interaction with MAP2K6 (PubMed:10848580, PubMed:15121867, PubMed:15229216). Can act as both a positive and negative regulator of the insulin signaling pathway (ISP) (PubMed:20685959). Negatively regulates ISP by inducing the inhibitory phosphorylation of insulin receptor substrate 1 (IRS1) at 'Ser-312' and positively regulates ISP via phosphorylation of PPP2R5A which activates FOXO1, which in turn up-regulates the expression of insulin receptor substrate 2 (IRS2) (PubMed:20685959). Can regulate NLRP3 inflammasome assembly and the activation of NLRP3, NLRP1, AIM2 and NLRC4 inflammasomes (PubMed:22801494). Plays a role in the regulation of the cytoskeleton by binding to gelsolin (GSN), sequestering the protein in an inactive conformation away from actin (By similarity).</text>
</comment>
<comment type="catalytic activity">
    <reaction>
        <text>L-seryl-[protein] + ATP = O-phospho-L-seryl-[protein] + ADP + H(+)</text>
        <dbReference type="Rhea" id="RHEA:17989"/>
        <dbReference type="Rhea" id="RHEA-COMP:9863"/>
        <dbReference type="Rhea" id="RHEA-COMP:11604"/>
        <dbReference type="ChEBI" id="CHEBI:15378"/>
        <dbReference type="ChEBI" id="CHEBI:29999"/>
        <dbReference type="ChEBI" id="CHEBI:30616"/>
        <dbReference type="ChEBI" id="CHEBI:83421"/>
        <dbReference type="ChEBI" id="CHEBI:456216"/>
        <dbReference type="EC" id="2.7.11.1"/>
    </reaction>
</comment>
<comment type="catalytic activity">
    <reaction>
        <text>L-threonyl-[protein] + ATP = O-phospho-L-threonyl-[protein] + ADP + H(+)</text>
        <dbReference type="Rhea" id="RHEA:46608"/>
        <dbReference type="Rhea" id="RHEA-COMP:11060"/>
        <dbReference type="Rhea" id="RHEA-COMP:11605"/>
        <dbReference type="ChEBI" id="CHEBI:15378"/>
        <dbReference type="ChEBI" id="CHEBI:30013"/>
        <dbReference type="ChEBI" id="CHEBI:30616"/>
        <dbReference type="ChEBI" id="CHEBI:61977"/>
        <dbReference type="ChEBI" id="CHEBI:456216"/>
        <dbReference type="EC" id="2.7.11.1"/>
    </reaction>
</comment>
<comment type="catalytic activity">
    <reaction evidence="4">
        <text>L-tyrosyl-[protein] + ATP = O-phospho-L-tyrosyl-[protein] + ADP + H(+)</text>
        <dbReference type="Rhea" id="RHEA:10596"/>
        <dbReference type="Rhea" id="RHEA-COMP:10136"/>
        <dbReference type="Rhea" id="RHEA-COMP:20101"/>
        <dbReference type="ChEBI" id="CHEBI:15378"/>
        <dbReference type="ChEBI" id="CHEBI:30616"/>
        <dbReference type="ChEBI" id="CHEBI:46858"/>
        <dbReference type="ChEBI" id="CHEBI:61978"/>
        <dbReference type="ChEBI" id="CHEBI:456216"/>
        <dbReference type="EC" id="2.7.10.2"/>
    </reaction>
</comment>
<comment type="cofactor">
    <cofactor evidence="17 68">
        <name>Mg(2+)</name>
        <dbReference type="ChEBI" id="CHEBI:18420"/>
    </cofactor>
</comment>
<comment type="activity regulation">
    <text evidence="13 26 27 47 48">Initially produced in an inactive form and is activated by binding to viral dsRNA, which causes dimerization and autophosphorylation in the activation loop and stimulation of function. ISGylation can activate it in the absence of viral infection. Can also be activated by heparin, pro-inflammatory stimuli, growth factors, cytokines, oxidative stress and the cellular protein PRKRA. Activity is markedly stimulated by manganese ions. Activation is blocked by the viral components HIV-1 Tat protein and large amounts of HIV-1 trans-activation response (TAR) RNA element as well as by the cellular proteins TARBP2, DUS2L, NPM1, NCK1 and ADAR. Down-regulated by Toscana virus (TOS) and Rift valley fever virus (RVFV) NSS which promote its proteasomal degradation. Inhibited by vaccinia virus protein E3, probably via dsRNA sequestering.</text>
</comment>
<comment type="subunit">
    <text evidence="1 6 7 11 13 14 15 16 17 22 26 27 30 43 45 52 55 60 61 62 65">Homodimer (PubMed:16179258, PubMed:31246429). Interacts with STRBP (By similarity). Interacts with DNAJC3. Forms a complex with FANCA, FANCC, FANCG and HSP70. Interacts with ADAR/ADAR1. Interacts with IRS1 (By similarity). The inactive form interacts with NCK1 and GSN. Interacts (via the kinase catalytic domain) with STAT3 (via SH2 domain), TRAF2 (C-terminus), TRAF5 (C-terminus) and TRAF6 (C-terminus). Interacts with MAP2K6, IKBKB/IKKB, NPM1, TARBP2, NLRP1, NLRP3, NLRC4 and AIM2. Interacts (via DRBM 1 domain) with DUS2L (via DRBM domain). Interacts with DHX9 (via N-terminus) and this interaction is dependent upon activation of the kinase. Interacts with EIF2S1/EIF-2ALPHA; this interaction induces a conformational change in EIF2S1 and its phosphorylation by EIF2AK2 (PubMed:16179258).</text>
</comment>
<comment type="subunit">
    <text evidence="21 53">(Microbial infection) Interacts with human cytomegalovirus (HCMV) TRS1; this interaction retains EIF2AK2 to the nucleus and prevents its activation.</text>
</comment>
<comment type="subunit">
    <text evidence="28">(Microbial infection) Interacts with vaccinia virus protein K3 (K3L); this interaction inhibits EIF2AK2.</text>
</comment>
<comment type="subunit">
    <text evidence="12">(Microbial infection) Interacts with human herpes simplex virus 1 (HHV-1) protein US11 in an RNA-dependent manner.</text>
</comment>
<comment type="subunit">
    <text evidence="48">(Microbial infection) The inactive form interacts with Toscana virus (TOS) NSS.</text>
</comment>
<comment type="subunit">
    <text evidence="9">(Microbial infection) Interacts with herpes virus 8 protein v-IRF2; this interaction inhibits EIF2AK2 activation.</text>
</comment>
<comment type="subunit">
    <text evidence="52">(Microbial infection) Interacts with vaccinia protein E3.</text>
</comment>
<comment type="subunit">
    <text evidence="23">(Microbial infection) Interacts (via N-terminus) with Hepatitis C virus (HCV) mature core protein (via N-terminus); this interaction induces the autophosphorylation of EIF2AK2.</text>
</comment>
<comment type="subunit">
    <text evidence="19 25 62 63">(Microbial infection) Interacts with Hepatitis C virus (HCV) non-structural protein 5A (NS5A); this interaction leads to disruption of EIF2AK2 dimerization by NS5A.</text>
</comment>
<comment type="subunit">
    <text evidence="62">(Microbial infection) Interacts with Hepatitis C virus (HCV) envelope glycoprotein E2; this interaction inhibits EIF2AK2 and blocks its inhibitory effect on protein synthesis and cell growth.</text>
</comment>
<comment type="subunit">
    <text evidence="35">(Microbial infection) Interacts with human respiratory syncytial virus (HRSV) nucleoprotein; this interaction inhibits EIF2AK2 phosphorylation of EIF2S1 and blocks EIF2AK2-mediated translation shutoff.</text>
</comment>
<comment type="subunit">
    <text evidence="54">(Microbial infection) Interacts with human herpesvirus 8 protein MTA/ORF57; this interaction inhibits stress granule formation.</text>
</comment>
<comment type="interaction">
    <interactant intactId="EBI-640775">
        <id>P19525</id>
    </interactant>
    <interactant intactId="EBI-12002366">
        <id>P78563-4</id>
        <label>ADARB1</label>
    </interactant>
    <organismsDiffer>false</organismsDiffer>
    <experiments>3</experiments>
</comment>
<comment type="interaction">
    <interactant intactId="EBI-640775">
        <id>P19525</id>
    </interactant>
    <interactant intactId="EBI-444308">
        <id>P06493</id>
        <label>CDK1</label>
    </interactant>
    <organismsDiffer>false</organismsDiffer>
    <experiments>4</experiments>
</comment>
<comment type="interaction">
    <interactant intactId="EBI-640775">
        <id>P19525</id>
    </interactant>
    <interactant intactId="EBI-1211456">
        <id>Q7L2E3</id>
        <label>DHX30</label>
    </interactant>
    <organismsDiffer>false</organismsDiffer>
    <experiments>4</experiments>
</comment>
<comment type="interaction">
    <interactant intactId="EBI-640775">
        <id>P19525</id>
    </interactant>
    <interactant intactId="EBI-744193">
        <id>Q96C10</id>
        <label>DHX58</label>
    </interactant>
    <organismsDiffer>false</organismsDiffer>
    <experiments>2</experiments>
</comment>
<comment type="interaction">
    <interactant intactId="EBI-640775">
        <id>P19525</id>
    </interactant>
    <interactant intactId="EBI-352022">
        <id>Q08211</id>
        <label>DHX9</label>
    </interactant>
    <organismsDiffer>false</organismsDiffer>
    <experiments>4</experiments>
</comment>
<comment type="interaction">
    <interactant intactId="EBI-640775">
        <id>P19525</id>
    </interactant>
    <interactant intactId="EBI-395506">
        <id>Q9UPY3</id>
        <label>DICER1</label>
    </interactant>
    <organismsDiffer>false</organismsDiffer>
    <experiments>2</experiments>
</comment>
<comment type="interaction">
    <interactant intactId="EBI-640775">
        <id>P19525</id>
    </interactant>
    <interactant intactId="EBI-1006038">
        <id>Q6P2E9</id>
        <label>EDC4</label>
    </interactant>
    <organismsDiffer>false</organismsDiffer>
    <experiments>2</experiments>
</comment>
<comment type="interaction">
    <interactant intactId="EBI-640775">
        <id>P19525</id>
    </interactant>
    <interactant intactId="EBI-640775">
        <id>P19525</id>
        <label>EIF2AK2</label>
    </interactant>
    <organismsDiffer>false</organismsDiffer>
    <experiments>2</experiments>
</comment>
<comment type="interaction">
    <interactant intactId="EBI-640775">
        <id>P19525</id>
    </interactant>
    <interactant intactId="EBI-1056162">
        <id>P05198</id>
        <label>EIF2S1</label>
    </interactant>
    <organismsDiffer>false</organismsDiffer>
    <experiments>5</experiments>
</comment>
<comment type="interaction">
    <interactant intactId="EBI-640775">
        <id>P19525</id>
    </interactant>
    <interactant intactId="EBI-372243">
        <id>P56537</id>
        <label>EIF6</label>
    </interactant>
    <organismsDiffer>false</organismsDiffer>
    <experiments>2</experiments>
</comment>
<comment type="interaction">
    <interactant intactId="EBI-640775">
        <id>P19525</id>
    </interactant>
    <interactant intactId="EBI-744088">
        <id>Q8IY81</id>
        <label>FTSJ3</label>
    </interactant>
    <organismsDiffer>false</organismsDiffer>
    <experiments>3</experiments>
</comment>
<comment type="interaction">
    <interactant intactId="EBI-640775">
        <id>P19525</id>
    </interactant>
    <interactant intactId="EBI-1055820">
        <id>Q9HCE1</id>
        <label>MOV10</label>
    </interactant>
    <organismsDiffer>false</organismsDiffer>
    <experiments>3</experiments>
</comment>
<comment type="interaction">
    <interactant intactId="EBI-640775">
        <id>P19525</id>
    </interactant>
    <interactant intactId="EBI-6253230">
        <id>Q96P20</id>
        <label>NLRP3</label>
    </interactant>
    <organismsDiffer>false</organismsDiffer>
    <experiments>6</experiments>
</comment>
<comment type="interaction">
    <interactant intactId="EBI-640775">
        <id>P19525</id>
    </interactant>
    <interactant intactId="EBI-78579">
        <id>P06748</id>
        <label>NPM1</label>
    </interactant>
    <organismsDiffer>false</organismsDiffer>
    <experiments>4</experiments>
</comment>
<comment type="interaction">
    <interactant intactId="EBI-640775">
        <id>P19525</id>
    </interactant>
    <interactant intactId="EBI-713955">
        <id>O75569</id>
        <label>PRKRA</label>
    </interactant>
    <organismsDiffer>false</organismsDiffer>
    <experiments>6</experiments>
</comment>
<comment type="interaction">
    <interactant intactId="EBI-640775">
        <id>P19525</id>
    </interactant>
    <interactant intactId="EBI-15588172">
        <id>O75569-1</id>
        <label>PRKRA</label>
    </interactant>
    <organismsDiffer>false</organismsDiffer>
    <experiments>3</experiments>
</comment>
<comment type="interaction">
    <interactant intactId="EBI-640775">
        <id>P19525</id>
    </interactant>
    <interactant intactId="EBI-722938">
        <id>Q9NUL3</id>
        <label>STAU2</label>
    </interactant>
    <organismsDiffer>false</organismsDiffer>
    <experiments>3</experiments>
</comment>
<comment type="interaction">
    <interactant intactId="EBI-640775">
        <id>P19525</id>
    </interactant>
    <interactant intactId="EBI-978581">
        <id>Q15633</id>
        <label>TARBP2</label>
    </interactant>
    <organismsDiffer>false</organismsDiffer>
    <experiments>2</experiments>
</comment>
<comment type="interaction">
    <interactant intactId="EBI-640775">
        <id>P19525</id>
    </interactant>
    <interactant intactId="EBI-74615">
        <id>Q9H0E2</id>
        <label>TOLLIP</label>
    </interactant>
    <organismsDiffer>false</organismsDiffer>
    <experiments>2</experiments>
</comment>
<comment type="interaction">
    <interactant intactId="EBI-640775">
        <id>P19525</id>
    </interactant>
    <interactant intactId="EBI-2462313">
        <id>Q9UL40</id>
        <label>ZNF346</label>
    </interactant>
    <organismsDiffer>false</organismsDiffer>
    <experiments>4</experiments>
</comment>
<comment type="interaction">
    <interactant intactId="EBI-640775">
        <id>P19525</id>
    </interactant>
    <interactant intactId="EBI-640793">
        <id>Q27968</id>
        <label>DNAJC3</label>
    </interactant>
    <organismsDiffer>true</organismsDiffer>
    <experiments>5</experiments>
</comment>
<comment type="interaction">
    <interactant intactId="EBI-640775">
        <id>P19525</id>
    </interactant>
    <interactant intactId="EBI-25475856">
        <id>P0DTC9</id>
        <label>N</label>
    </interactant>
    <organismsDiffer>true</organismsDiffer>
    <experiments>8</experiments>
</comment>
<comment type="interaction">
    <interactant intactId="EBI-640775">
        <id>P19525</id>
    </interactant>
    <interactant intactId="EBI-8674942">
        <id>P20639</id>
        <label>OPG041</label>
    </interactant>
    <organismsDiffer>true</organismsDiffer>
    <experiments>3</experiments>
</comment>
<comment type="interaction">
    <interactant intactId="EBI-640775">
        <id>P19525</id>
    </interactant>
    <interactant intactId="EBI-6150681">
        <id>P04487</id>
        <label>US11</label>
    </interactant>
    <organismsDiffer>true</organismsDiffer>
    <experiments>3</experiments>
</comment>
<comment type="interaction">
    <interactant intactId="EBI-640775">
        <id>P19525</id>
    </interactant>
    <interactant intactId="EBI-8876177">
        <id>Q2HR71</id>
        <label>vIRF-2</label>
    </interactant>
    <organismsDiffer>true</organismsDiffer>
    <experiments>2</experiments>
</comment>
<comment type="interaction">
    <interactant intactId="EBI-640775">
        <id>P19525</id>
    </interactant>
    <interactant intactId="EBI-6918883">
        <id>PRO_0000278746</id>
        <dbReference type="UniProtKB" id="O92972"/>
    </interactant>
    <organismsDiffer>true</organismsDiffer>
    <experiments>2</experiments>
</comment>
<comment type="interaction">
    <interactant intactId="EBI-640775">
        <id>P19525</id>
    </interactant>
    <interactant intactId="EBI-6904269">
        <id>PRO_0000037570</id>
        <dbReference type="UniProtKB" id="P27958"/>
    </interactant>
    <organismsDiffer>true</organismsDiffer>
    <experiments>4</experiments>
</comment>
<comment type="interaction">
    <interactant intactId="EBI-640775">
        <id>P19525</id>
    </interactant>
    <interactant intactId="EBI-8753518">
        <id>PRO_0000037576</id>
        <dbReference type="UniProtKB" id="P27958"/>
    </interactant>
    <organismsDiffer>true</organismsDiffer>
    <experiments>5</experiments>
</comment>
<comment type="subcellular location">
    <subcellularLocation>
        <location evidence="14 37 41">Cytoplasm</location>
    </subcellularLocation>
    <subcellularLocation>
        <location evidence="37 38">Nucleus</location>
    </subcellularLocation>
    <subcellularLocation>
        <location evidence="14">Cytoplasm</location>
        <location evidence="14">Perinuclear region</location>
    </subcellularLocation>
    <text evidence="38">Nuclear localization is elevated in acute leukemia, myelodysplastic syndrome (MDS), melanoma, breast, colon, prostate and lung cancer patient samples or cell lines as well as neurocytes from advanced Creutzfeldt-Jakob disease patients.</text>
</comment>
<comment type="alternative products">
    <event type="alternative splicing"/>
    <isoform>
        <id>P19525-1</id>
        <name>1</name>
        <sequence type="displayed"/>
    </isoform>
    <isoform>
        <id>P19525-2</id>
        <name>2</name>
        <sequence type="described" ref="VSP_046177"/>
    </isoform>
</comment>
<comment type="tissue specificity">
    <text evidence="37 51">Highly expressed in thymus, spleen and bone marrow compared to non-hematopoietic tissues such as small intestine, liver, or kidney tissues. Colocalizes with GSK3B and TAU in the Alzheimer disease (AD) brain. Elevated levels seen in breast and colon carcinomas, and which correlates with tumor progression and invasiveness or risk of progression.</text>
</comment>
<comment type="induction">
    <text evidence="20">By type I interferons.</text>
</comment>
<comment type="domain">
    <text evidence="17 64">Contains 2 dsRNA-binding domain (DRBM) (PubMed:9736623). The N-terminus contains the catalytic domain dimerization. The C-terminus binds EIF2S1/EIF2-alpha (PubMed:16179258).</text>
</comment>
<comment type="PTM">
    <text evidence="8 10 17 18 36 37 38">Autophosphorylated on several Ser, Thr and Tyr residues. Autophosphorylation of Thr-451 is dependent on Thr-446 and is stimulated by dsRNA binding and dimerization. Autophosphorylation apparently leads to the activation of the kinase. Tyrosine autophosphorylation is essential for efficient dsRNA-binding, dimerization, and kinase activation.</text>
</comment>
<comment type="disease" evidence="56">
    <disease id="DI-05835">
        <name>Leukoencephalopathy, developmental delay, and episodic neurologic regression syndrome</name>
        <acronym>LEUDEN</acronym>
        <description>An autosomal dominant disorder characterized by global developmental delay apparent in early childhood, cognitive impairment, ataxia, poor or absent speech with dysarthria, hypotonia, hypertonia, extrapyramidal signs, tremor, and abnormal involuntary movements. Affected individuals also exhibit neurological regression in the setting of febrile illness or infection. Many patients have seizures. Brain imaging shows diffuse white matter abnormalities with poor myelination.</description>
        <dbReference type="MIM" id="618877"/>
    </disease>
    <text>The disease may be caused by variants affecting the gene represented in this entry.</text>
</comment>
<comment type="disease" evidence="57 58 59">
    <disease id="DI-06304">
        <name>Dystonia 33</name>
        <acronym>DYT33</acronym>
        <description>A form of dystonia, a disorder defined by the presence of sustained involuntary muscle contraction, often leading to abnormal postures. DYT33 is a slowly progressive form characterized by onset of focal or generalized dystonia in the first decades of life. Disease manifestations are variable. Some patients show ambulation difficulties, dysarthria, or dysphagia. Some affected individuals may manifest motor delay, lower limb spasticity, and mild developmental delay with intellectual disability. DYT33 penetrance is incomplete. Inheritance can be autosomal dominant or recessive.</description>
        <dbReference type="MIM" id="619687"/>
    </disease>
    <text>The disease is caused by variants affecting the gene represented in this entry.</text>
</comment>
<comment type="similarity">
    <text evidence="2">Belongs to the protein kinase superfamily. Ser/Thr protein kinase family. GCN2 subfamily.</text>
</comment>
<comment type="online information" name="Atlas of Genetics and Cytogenetics in Oncology and Haematology">
    <link uri="https://atlasgeneticsoncology.org/gene/41866/EIF2AK2"/>
</comment>
<sequence>MAGDLSAGFFMEELNTYRQKQGVVLKYQELPNSGPPHDRRFTFQVIIDGREFPEGEGRSKKEAKNAAAKLAVEILNKEKKAVSPLLLTTTNSSEGLSMGNYIGLINRIAQKKRLTVNYEQCASGVHGPEGFHYKCKMGQKEYSIGTGSTKQEAKQLAAKLAYLQILSEETSVKSDYLSSGSFATTCESQSNSLVTSTLASESSSEGDFSADTSEINSNSDSLNSSSLLMNGLRNNQRKAKRSLAPRFDLPDMKETKYTVDKRFGMDFKEIELIGSGGFGQVFKAKHRIDGKTYVIKRVKYNNEKAEREVKALAKLDHVNIVHYNGCWDGFDYDPETSDDSLESSDYDPENSKNSSRSKTKCLFIQMEFCDKGTLEQWIEKRRGEKLDKVLALELFEQITKGVDYIHSKKLIHRDLKPSNIFLVDTKQVKIGDFGLVTSLKNDGKRTRSKGTLRYMSPEQISSQDYGKEVDLYALGLILAELLHVCDTAFETSKFFTDLRDGIISDIFDKKEKTLLQKLLSKKPEDRPNTSEILRTLTVWKKSPEKNERHTC</sequence>
<name>E2AK2_HUMAN</name>
<reference key="1">
    <citation type="journal article" date="1990" name="Cell">
        <title>Molecular cloning and characterization of the human double-stranded RNA-activated protein kinase induced by interferon.</title>
        <authorList>
            <person name="Meurs E."/>
            <person name="Chong K."/>
            <person name="Galabru J."/>
            <person name="Thomas N.S.B."/>
            <person name="Kerr I.M."/>
            <person name="Williams B.R.G."/>
            <person name="Hovanessian A.G."/>
        </authorList>
    </citation>
    <scope>NUCLEOTIDE SEQUENCE [MRNA] (ISOFORM 1)</scope>
    <scope>PROTEIN SEQUENCE OF 101-118 AND 309-325</scope>
    <scope>INDUCTION</scope>
</reference>
<reference key="2">
    <citation type="submission" date="1990-08" db="EMBL/GenBank/DDBJ databases">
        <authorList>
            <person name="Meurs E."/>
        </authorList>
    </citation>
    <scope>SEQUENCE REVISION</scope>
</reference>
<reference key="3">
    <citation type="journal article" date="1992" name="Virology">
        <title>Mechanism of interferon action: cDNA structure, expression, and regulation of the interferon-induced, RNA-dependent P1/eIF-2 alpha protein kinase from human cells.</title>
        <authorList>
            <person name="Thomis D.C."/>
            <person name="Doohan J.P."/>
            <person name="Samuel C.E."/>
        </authorList>
    </citation>
    <scope>NUCLEOTIDE SEQUENCE [MRNA] (ISOFORM 1)</scope>
</reference>
<reference key="4">
    <citation type="journal article" date="1996" name="Gene">
        <title>Mechanism of interferon action sequence of the human interferon-inducible RNA-dependent protein kinase (PKR) deduced from genomic clones.</title>
        <authorList>
            <person name="Kuhen K.L."/>
            <person name="Shen X."/>
            <person name="Samuel C.E."/>
        </authorList>
    </citation>
    <scope>NUCLEOTIDE SEQUENCE [GENOMIC DNA / MRNA] (ISOFORM 1)</scope>
</reference>
<reference key="5">
    <citation type="journal article" date="1996" name="Genomics">
        <title>Structural organization of the human gene (PKR) encoding an interferon-inducible RNA-dependent protein kinase (PKR) and differences from its mouse homolog.</title>
        <authorList>
            <person name="Kuhen K.L."/>
            <person name="Shen X."/>
            <person name="Carlisle E.R."/>
            <person name="Richardson A.L."/>
            <person name="Weier H.-U.G."/>
            <person name="Tanaka H."/>
            <person name="Samuel C.E."/>
        </authorList>
    </citation>
    <scope>NUCLEOTIDE SEQUENCE [GENOMIC DNA]</scope>
    <source>
        <tissue>Placenta</tissue>
    </source>
</reference>
<reference key="6">
    <citation type="journal article" date="1998" name="J. Interferon Cytokine Res.">
        <title>Genomic features of human PKR: alternative splicing and a polymorphic CGG repeat in the 5'-untranslated region.</title>
        <authorList>
            <person name="Xu Z."/>
            <person name="Williams B.R."/>
        </authorList>
    </citation>
    <scope>NUCLEOTIDE SEQUENCE [GENOMIC DNA]</scope>
</reference>
<reference key="7">
    <citation type="submission" date="2003-05" db="EMBL/GenBank/DDBJ databases">
        <authorList>
            <person name="Li H."/>
            <person name="Huang F."/>
            <person name="Shen C."/>
            <person name="Zhou G."/>
            <person name="Zheng G."/>
            <person name="Ke R."/>
            <person name="Lin L."/>
            <person name="Yang S."/>
        </authorList>
    </citation>
    <scope>NUCLEOTIDE SEQUENCE [MRNA] (ISOFORM 2)</scope>
</reference>
<reference key="8">
    <citation type="journal article" date="2004" name="Nat. Genet.">
        <title>Complete sequencing and characterization of 21,243 full-length human cDNAs.</title>
        <authorList>
            <person name="Ota T."/>
            <person name="Suzuki Y."/>
            <person name="Nishikawa T."/>
            <person name="Otsuki T."/>
            <person name="Sugiyama T."/>
            <person name="Irie R."/>
            <person name="Wakamatsu A."/>
            <person name="Hayashi K."/>
            <person name="Sato H."/>
            <person name="Nagai K."/>
            <person name="Kimura K."/>
            <person name="Makita H."/>
            <person name="Sekine M."/>
            <person name="Obayashi M."/>
            <person name="Nishi T."/>
            <person name="Shibahara T."/>
            <person name="Tanaka T."/>
            <person name="Ishii S."/>
            <person name="Yamamoto J."/>
            <person name="Saito K."/>
            <person name="Kawai Y."/>
            <person name="Isono Y."/>
            <person name="Nakamura Y."/>
            <person name="Nagahari K."/>
            <person name="Murakami K."/>
            <person name="Yasuda T."/>
            <person name="Iwayanagi T."/>
            <person name="Wagatsuma M."/>
            <person name="Shiratori A."/>
            <person name="Sudo H."/>
            <person name="Hosoiri T."/>
            <person name="Kaku Y."/>
            <person name="Kodaira H."/>
            <person name="Kondo H."/>
            <person name="Sugawara M."/>
            <person name="Takahashi M."/>
            <person name="Kanda K."/>
            <person name="Yokoi T."/>
            <person name="Furuya T."/>
            <person name="Kikkawa E."/>
            <person name="Omura Y."/>
            <person name="Abe K."/>
            <person name="Kamihara K."/>
            <person name="Katsuta N."/>
            <person name="Sato K."/>
            <person name="Tanikawa M."/>
            <person name="Yamazaki M."/>
            <person name="Ninomiya K."/>
            <person name="Ishibashi T."/>
            <person name="Yamashita H."/>
            <person name="Murakawa K."/>
            <person name="Fujimori K."/>
            <person name="Tanai H."/>
            <person name="Kimata M."/>
            <person name="Watanabe M."/>
            <person name="Hiraoka S."/>
            <person name="Chiba Y."/>
            <person name="Ishida S."/>
            <person name="Ono Y."/>
            <person name="Takiguchi S."/>
            <person name="Watanabe S."/>
            <person name="Yosida M."/>
            <person name="Hotuta T."/>
            <person name="Kusano J."/>
            <person name="Kanehori K."/>
            <person name="Takahashi-Fujii A."/>
            <person name="Hara H."/>
            <person name="Tanase T.-O."/>
            <person name="Nomura Y."/>
            <person name="Togiya S."/>
            <person name="Komai F."/>
            <person name="Hara R."/>
            <person name="Takeuchi K."/>
            <person name="Arita M."/>
            <person name="Imose N."/>
            <person name="Musashino K."/>
            <person name="Yuuki H."/>
            <person name="Oshima A."/>
            <person name="Sasaki N."/>
            <person name="Aotsuka S."/>
            <person name="Yoshikawa Y."/>
            <person name="Matsunawa H."/>
            <person name="Ichihara T."/>
            <person name="Shiohata N."/>
            <person name="Sano S."/>
            <person name="Moriya S."/>
            <person name="Momiyama H."/>
            <person name="Satoh N."/>
            <person name="Takami S."/>
            <person name="Terashima Y."/>
            <person name="Suzuki O."/>
            <person name="Nakagawa S."/>
            <person name="Senoh A."/>
            <person name="Mizoguchi H."/>
            <person name="Goto Y."/>
            <person name="Shimizu F."/>
            <person name="Wakebe H."/>
            <person name="Hishigaki H."/>
            <person name="Watanabe T."/>
            <person name="Sugiyama A."/>
            <person name="Takemoto M."/>
            <person name="Kawakami B."/>
            <person name="Yamazaki M."/>
            <person name="Watanabe K."/>
            <person name="Kumagai A."/>
            <person name="Itakura S."/>
            <person name="Fukuzumi Y."/>
            <person name="Fujimori Y."/>
            <person name="Komiyama M."/>
            <person name="Tashiro H."/>
            <person name="Tanigami A."/>
            <person name="Fujiwara T."/>
            <person name="Ono T."/>
            <person name="Yamada K."/>
            <person name="Fujii Y."/>
            <person name="Ozaki K."/>
            <person name="Hirao M."/>
            <person name="Ohmori Y."/>
            <person name="Kawabata A."/>
            <person name="Hikiji T."/>
            <person name="Kobatake N."/>
            <person name="Inagaki H."/>
            <person name="Ikema Y."/>
            <person name="Okamoto S."/>
            <person name="Okitani R."/>
            <person name="Kawakami T."/>
            <person name="Noguchi S."/>
            <person name="Itoh T."/>
            <person name="Shigeta K."/>
            <person name="Senba T."/>
            <person name="Matsumura K."/>
            <person name="Nakajima Y."/>
            <person name="Mizuno T."/>
            <person name="Morinaga M."/>
            <person name="Sasaki M."/>
            <person name="Togashi T."/>
            <person name="Oyama M."/>
            <person name="Hata H."/>
            <person name="Watanabe M."/>
            <person name="Komatsu T."/>
            <person name="Mizushima-Sugano J."/>
            <person name="Satoh T."/>
            <person name="Shirai Y."/>
            <person name="Takahashi Y."/>
            <person name="Nakagawa K."/>
            <person name="Okumura K."/>
            <person name="Nagase T."/>
            <person name="Nomura N."/>
            <person name="Kikuchi H."/>
            <person name="Masuho Y."/>
            <person name="Yamashita R."/>
            <person name="Nakai K."/>
            <person name="Yada T."/>
            <person name="Nakamura Y."/>
            <person name="Ohara O."/>
            <person name="Isogai T."/>
            <person name="Sugano S."/>
        </authorList>
    </citation>
    <scope>NUCLEOTIDE SEQUENCE [LARGE SCALE MRNA] (ISOFORM 1)</scope>
    <source>
        <tissue>Brain</tissue>
        <tissue>Embryo</tissue>
    </source>
</reference>
<reference key="9">
    <citation type="submission" date="2003-01" db="EMBL/GenBank/DDBJ databases">
        <authorList>
            <consortium name="NIEHS SNPs program"/>
        </authorList>
    </citation>
    <scope>NUCLEOTIDE SEQUENCE [GENOMIC DNA]</scope>
</reference>
<reference key="10">
    <citation type="journal article" date="2005" name="Nature">
        <title>Generation and annotation of the DNA sequences of human chromosomes 2 and 4.</title>
        <authorList>
            <person name="Hillier L.W."/>
            <person name="Graves T.A."/>
            <person name="Fulton R.S."/>
            <person name="Fulton L.A."/>
            <person name="Pepin K.H."/>
            <person name="Minx P."/>
            <person name="Wagner-McPherson C."/>
            <person name="Layman D."/>
            <person name="Wylie K."/>
            <person name="Sekhon M."/>
            <person name="Becker M.C."/>
            <person name="Fewell G.A."/>
            <person name="Delehaunty K.D."/>
            <person name="Miner T.L."/>
            <person name="Nash W.E."/>
            <person name="Kremitzki C."/>
            <person name="Oddy L."/>
            <person name="Du H."/>
            <person name="Sun H."/>
            <person name="Bradshaw-Cordum H."/>
            <person name="Ali J."/>
            <person name="Carter J."/>
            <person name="Cordes M."/>
            <person name="Harris A."/>
            <person name="Isak A."/>
            <person name="van Brunt A."/>
            <person name="Nguyen C."/>
            <person name="Du F."/>
            <person name="Courtney L."/>
            <person name="Kalicki J."/>
            <person name="Ozersky P."/>
            <person name="Abbott S."/>
            <person name="Armstrong J."/>
            <person name="Belter E.A."/>
            <person name="Caruso L."/>
            <person name="Cedroni M."/>
            <person name="Cotton M."/>
            <person name="Davidson T."/>
            <person name="Desai A."/>
            <person name="Elliott G."/>
            <person name="Erb T."/>
            <person name="Fronick C."/>
            <person name="Gaige T."/>
            <person name="Haakenson W."/>
            <person name="Haglund K."/>
            <person name="Holmes A."/>
            <person name="Harkins R."/>
            <person name="Kim K."/>
            <person name="Kruchowski S.S."/>
            <person name="Strong C.M."/>
            <person name="Grewal N."/>
            <person name="Goyea E."/>
            <person name="Hou S."/>
            <person name="Levy A."/>
            <person name="Martinka S."/>
            <person name="Mead K."/>
            <person name="McLellan M.D."/>
            <person name="Meyer R."/>
            <person name="Randall-Maher J."/>
            <person name="Tomlinson C."/>
            <person name="Dauphin-Kohlberg S."/>
            <person name="Kozlowicz-Reilly A."/>
            <person name="Shah N."/>
            <person name="Swearengen-Shahid S."/>
            <person name="Snider J."/>
            <person name="Strong J.T."/>
            <person name="Thompson J."/>
            <person name="Yoakum M."/>
            <person name="Leonard S."/>
            <person name="Pearman C."/>
            <person name="Trani L."/>
            <person name="Radionenko M."/>
            <person name="Waligorski J.E."/>
            <person name="Wang C."/>
            <person name="Rock S.M."/>
            <person name="Tin-Wollam A.-M."/>
            <person name="Maupin R."/>
            <person name="Latreille P."/>
            <person name="Wendl M.C."/>
            <person name="Yang S.-P."/>
            <person name="Pohl C."/>
            <person name="Wallis J.W."/>
            <person name="Spieth J."/>
            <person name="Bieri T.A."/>
            <person name="Berkowicz N."/>
            <person name="Nelson J.O."/>
            <person name="Osborne J."/>
            <person name="Ding L."/>
            <person name="Meyer R."/>
            <person name="Sabo A."/>
            <person name="Shotland Y."/>
            <person name="Sinha P."/>
            <person name="Wohldmann P.E."/>
            <person name="Cook L.L."/>
            <person name="Hickenbotham M.T."/>
            <person name="Eldred J."/>
            <person name="Williams D."/>
            <person name="Jones T.A."/>
            <person name="She X."/>
            <person name="Ciccarelli F.D."/>
            <person name="Izaurralde E."/>
            <person name="Taylor J."/>
            <person name="Schmutz J."/>
            <person name="Myers R.M."/>
            <person name="Cox D.R."/>
            <person name="Huang X."/>
            <person name="McPherson J.D."/>
            <person name="Mardis E.R."/>
            <person name="Clifton S.W."/>
            <person name="Warren W.C."/>
            <person name="Chinwalla A.T."/>
            <person name="Eddy S.R."/>
            <person name="Marra M.A."/>
            <person name="Ovcharenko I."/>
            <person name="Furey T.S."/>
            <person name="Miller W."/>
            <person name="Eichler E.E."/>
            <person name="Bork P."/>
            <person name="Suyama M."/>
            <person name="Torrents D."/>
            <person name="Waterston R.H."/>
            <person name="Wilson R.K."/>
        </authorList>
    </citation>
    <scope>NUCLEOTIDE SEQUENCE [LARGE SCALE GENOMIC DNA]</scope>
</reference>
<reference key="11">
    <citation type="submission" date="2005-09" db="EMBL/GenBank/DDBJ databases">
        <authorList>
            <person name="Mural R.J."/>
            <person name="Istrail S."/>
            <person name="Sutton G.G."/>
            <person name="Florea L."/>
            <person name="Halpern A.L."/>
            <person name="Mobarry C.M."/>
            <person name="Lippert R."/>
            <person name="Walenz B."/>
            <person name="Shatkay H."/>
            <person name="Dew I."/>
            <person name="Miller J.R."/>
            <person name="Flanigan M.J."/>
            <person name="Edwards N.J."/>
            <person name="Bolanos R."/>
            <person name="Fasulo D."/>
            <person name="Halldorsson B.V."/>
            <person name="Hannenhalli S."/>
            <person name="Turner R."/>
            <person name="Yooseph S."/>
            <person name="Lu F."/>
            <person name="Nusskern D.R."/>
            <person name="Shue B.C."/>
            <person name="Zheng X.H."/>
            <person name="Zhong F."/>
            <person name="Delcher A.L."/>
            <person name="Huson D.H."/>
            <person name="Kravitz S.A."/>
            <person name="Mouchard L."/>
            <person name="Reinert K."/>
            <person name="Remington K.A."/>
            <person name="Clark A.G."/>
            <person name="Waterman M.S."/>
            <person name="Eichler E.E."/>
            <person name="Adams M.D."/>
            <person name="Hunkapiller M.W."/>
            <person name="Myers E.W."/>
            <person name="Venter J.C."/>
        </authorList>
    </citation>
    <scope>NUCLEOTIDE SEQUENCE [LARGE SCALE GENOMIC DNA]</scope>
</reference>
<reference key="12">
    <citation type="journal article" date="2004" name="Genome Res.">
        <title>The status, quality, and expansion of the NIH full-length cDNA project: the Mammalian Gene Collection (MGC).</title>
        <authorList>
            <consortium name="The MGC Project Team"/>
        </authorList>
    </citation>
    <scope>NUCLEOTIDE SEQUENCE [LARGE SCALE MRNA] (ISOFORM 1)</scope>
    <source>
        <tissue>Brain</tissue>
    </source>
</reference>
<reference key="13">
    <citation type="submission" date="2009-06" db="UniProtKB">
        <authorList>
            <person name="Bienvenut W.V."/>
            <person name="Gao M."/>
            <person name="Leug H."/>
        </authorList>
    </citation>
    <scope>PROTEIN SEQUENCE OF 2-18; 27-40; 70-77; 414-426 AND 430-440</scope>
    <scope>CLEAVAGE OF INITIATOR METHIONINE</scope>
    <scope>ACETYLATION AT ALA-2</scope>
    <scope>IDENTIFICATION BY MASS SPECTROMETRY</scope>
    <source>
        <tissue>Prostatic carcinoma</tissue>
    </source>
</reference>
<reference key="14">
    <citation type="journal article" date="1996" name="J. Biol. Chem.">
        <title>The P58 cellular inhibitor complexes with the interferon-induced, double-stranded RNA-dependent protein kinase, PKR, to regulate its autophosphorylation and activity.</title>
        <authorList>
            <person name="Polyak S.J."/>
            <person name="Tang N."/>
            <person name="Wambach M."/>
            <person name="Barber G.N."/>
            <person name="Katze M.G."/>
        </authorList>
    </citation>
    <scope>INTERACTION WITH DNAJC3</scope>
</reference>
<reference key="15">
    <citation type="journal article" date="1997" name="J. Biol. Chem.">
        <title>The Tat protein of human immunodeficiency virus type 1 is a substrate and inhibitor of the interferon-induced, virally activated protein kinase, PKR.</title>
        <authorList>
            <person name="Brand S.R."/>
            <person name="Kobayashi R."/>
            <person name="Mathews M.B."/>
        </authorList>
    </citation>
    <scope>INTERACTION WITH HIV-1 TAT</scope>
</reference>
<reference key="16">
    <citation type="journal article" date="1997" name="Virology">
        <title>Evidence that hepatitis C virus resistance to interferon is mediated through repression of the PKR protein kinase by the nonstructural 5A protein.</title>
        <authorList>
            <person name="Gale M.J. Jr."/>
            <person name="Korth M.J."/>
            <person name="Tang N.M."/>
            <person name="Tan S.-L."/>
            <person name="Hopkins D.A."/>
            <person name="Dever T.E."/>
            <person name="Polyak S.J."/>
            <person name="Gretch D.R."/>
            <person name="Katze M.G."/>
        </authorList>
    </citation>
    <scope>INTERACTION WITH HCV NON-STRUCTURAL PROTEIN 5A (MICROBIAL INFECTION)</scope>
</reference>
<reference key="17">
    <citation type="journal article" date="1998" name="Mol. Cell. Biol.">
        <title>Control of PKR protein kinase by hepatitis C virus nonstructural 5A protein: molecular mechanisms of kinase regulation.</title>
        <authorList>
            <person name="Gale M.J. Jr."/>
            <person name="Blakely C.M."/>
            <person name="Kwieciszewski B."/>
            <person name="Tan S.-L."/>
            <person name="Dossett M."/>
            <person name="Tang N.M."/>
            <person name="Korth M.J."/>
            <person name="Polyak S.J."/>
            <person name="Gretch D.R."/>
            <person name="Katze M.G."/>
        </authorList>
    </citation>
    <scope>INTERACTION WITH HCV NON-STRUCTURAL PROTEIN 5A (MICROBIAL INFECTION)</scope>
</reference>
<reference key="18">
    <citation type="journal article" date="1998" name="J. Interferon Cytokine Res.">
        <title>Biochemical and genetic evidence for complex formation between the influenza A virus NS1 protein and the interferon-induced PKR protein kinase.</title>
        <authorList>
            <person name="Tan S.L."/>
            <person name="Katze M.G."/>
        </authorList>
    </citation>
    <scope>INTERACTION WITH INFLUENZA A NS1 PROTEIN</scope>
</reference>
<reference key="19">
    <citation type="journal article" date="1999" name="Science">
        <title>Inhibition of the interferon-inducible protein kinase PKR by HCV E2 protein.</title>
        <authorList>
            <person name="Taylor D.R."/>
            <person name="Shi S.T."/>
            <person name="Romano P.R."/>
            <person name="Barber G.N."/>
            <person name="Lai M.M.C."/>
        </authorList>
    </citation>
    <scope>INTERACTION WITH HCV ENVELOPE GLYCOPROTEIN E2 (MICROBIAL INFECTION)</scope>
</reference>
<reference key="20">
    <citation type="journal article" date="2000" name="Mol. Cell. Biol.">
        <title>PKR stimulates NF-kappaB irrespective of its kinase function by interacting with the IkappaB kinase complex.</title>
        <authorList>
            <person name="Bonnet M.C."/>
            <person name="Weil R."/>
            <person name="Dam E."/>
            <person name="Hovanessian A.G."/>
            <person name="Meurs E.F."/>
        </authorList>
    </citation>
    <scope>FUNCTION</scope>
    <scope>INTERACTION WITH IKBKB</scope>
</reference>
<reference key="21">
    <citation type="journal article" date="2001" name="J. Biol. Chem.">
        <title>Two dimerization domains in the trans-activation response RNA-binding protein (TRBP) individually reverse the protein kinase R inhibition of HIV-1 long terminal repeat expression.</title>
        <authorList>
            <person name="Daher A."/>
            <person name="Longuet M."/>
            <person name="Dorin D."/>
            <person name="Bois F."/>
            <person name="Segeral E."/>
            <person name="Bannwarth S."/>
            <person name="Battisti P.-L."/>
            <person name="Purcell D.F."/>
            <person name="Benarous R."/>
            <person name="Vaquero C."/>
            <person name="Meurs E.F."/>
            <person name="Gatignol A."/>
        </authorList>
    </citation>
    <scope>INTERACTION WITH TARBP2</scope>
</reference>
<reference key="22">
    <citation type="journal article" date="2001" name="J. Virol.">
        <title>Hepatitis C virus envelope protein E2 does not inhibit PKR by simple competition with autophosphorylation sites in the RNA-binding domain.</title>
        <authorList>
            <person name="Taylor D.R."/>
            <person name="Tian B."/>
            <person name="Romano P.R."/>
            <person name="Hinnebusch A.G."/>
            <person name="Lai M.M.C."/>
            <person name="Mathews M.B."/>
        </authorList>
    </citation>
    <scope>PHOSPHORYLATION AT SER-83; THR-88; THR-89; THR-90; SER-242; THR-255 AND THR-258</scope>
    <scope>MUTAGENESIS OF SER-83; THR-88; THR-89; THR-90; SER-242; THR-255; THR-258 AND LYS-296</scope>
    <scope>INHIBITION BY HCV E2 ENVELOPE PROTEIN</scope>
</reference>
<reference key="23">
    <citation type="journal article" date="2001" name="J. Biol. Chem.">
        <title>Binding of double-stranded RNA to protein kinase PKR is required for dimerization and promotes critical autophosphorylation events in the activation loop.</title>
        <authorList>
            <person name="Zhang F."/>
            <person name="Romano P.R."/>
            <person name="Nagamura-Inoue T."/>
            <person name="Tian B."/>
            <person name="Dever T.E."/>
            <person name="Mathews M.B."/>
            <person name="Ozato K."/>
            <person name="Hinnebusch A.G."/>
        </authorList>
    </citation>
    <scope>MUTAGENESIS OF LYS-60; ALA-67; THR-446 AND THR-451</scope>
    <scope>PHOSPHORYLATION AT THR-446 AND THR-451</scope>
</reference>
<reference key="24">
    <citation type="journal article" date="2001" name="J. Virol.">
        <title>Latently expressed human herpesvirus 8-encoded interferon regulatory factor 2 inhibits double-stranded RNA-activated protein kinase.</title>
        <authorList>
            <person name="Burysek L."/>
            <person name="Pitha P.M."/>
        </authorList>
    </citation>
    <scope>INTERACTION WITH HHV-8 PROTEIN VIRF2 (MICROBIAL INFECTION)</scope>
</reference>
<reference key="25">
    <citation type="journal article" date="2002" name="J. Virol.">
        <title>The herpes simplex virus type 1 U(S)11 protein interacts with protein kinase R in infected cells and requires a 30-amino-acid sequence adjacent to a kinase substrate domain.</title>
        <authorList>
            <person name="Cassady K.A."/>
            <person name="Gross M."/>
        </authorList>
    </citation>
    <scope>FUNCTION</scope>
    <scope>INTERACTION WITH HHV-1 US11 (MICROBIAL INFECTION)</scope>
</reference>
<reference key="26">
    <citation type="journal article" date="2003" name="J. Biol. Chem.">
        <title>Nucleophosmin interacts with and inhibits the catalytic function of eukaryotic initiation factor 2 kinase PKR.</title>
        <authorList>
            <person name="Pang Q."/>
            <person name="Christianson T.A."/>
            <person name="Koretsky T."/>
            <person name="Carlson H."/>
            <person name="David L."/>
            <person name="Keeble W."/>
            <person name="Faulkner G.R."/>
            <person name="Speckhart A."/>
            <person name="Bagby G.C."/>
        </authorList>
    </citation>
    <scope>INTERACTION WITH NPM1</scope>
    <scope>ACTIVITY REGULATION</scope>
</reference>
<reference key="27">
    <citation type="journal article" date="2004" name="J. Biol. Chem.">
        <title>Protein kinase R (PKR) interacts with and activates mitogen-activated protein kinase kinase 6 (MKK6) in response to double-stranded RNA stimulation.</title>
        <authorList>
            <person name="Silva A.M."/>
            <person name="Whitmore M."/>
            <person name="Xu Z."/>
            <person name="Jiang Z."/>
            <person name="Li X."/>
            <person name="Williams B.R."/>
        </authorList>
    </citation>
    <scope>FUNCTION</scope>
    <scope>INTERACTION WITH MAP2K6</scope>
</reference>
<reference key="28">
    <citation type="journal article" date="2004" name="J. Biol. Chem.">
        <title>The Fanconi anemia proteins functionally interact with the protein kinase regulated by RNA (PKR).</title>
        <authorList>
            <person name="Zhang X."/>
            <person name="Li J."/>
            <person name="Sejas D.P."/>
            <person name="Rathbun K.R."/>
            <person name="Bagby G.C."/>
            <person name="Pang Q."/>
        </authorList>
    </citation>
    <scope>IDENTIFICATION IN A COMPLEX WITH FANCA; FANCC; FANCG AND HSP70</scope>
</reference>
<reference key="29">
    <citation type="journal article" date="2004" name="Mol. Cell. Biol.">
        <title>TRAF family proteins link PKR with NF-kappa B activation.</title>
        <authorList>
            <person name="Gil J."/>
            <person name="Garcia M.A."/>
            <person name="Gomez-Puertas P."/>
            <person name="Guerra S."/>
            <person name="Rullas J."/>
            <person name="Nakano H."/>
            <person name="Alcami J."/>
            <person name="Esteban M."/>
        </authorList>
    </citation>
    <scope>FUNCTION</scope>
    <scope>INTERACTION WITH TRAF2; TRAF5 AND TRAF6</scope>
    <scope>SUBCELLULAR LOCATION</scope>
</reference>
<reference key="30">
    <citation type="journal article" date="2004" name="Virology">
        <title>Inhibition of PKR by vaccinia virus: role of the N- and C-terminal domains of E3L.</title>
        <authorList>
            <person name="Langland J.O."/>
            <person name="Jacobs B.L."/>
        </authorList>
    </citation>
    <scope>INHIBITION BY VACCINIA VIRUS PROTEIN E3 (MICROBIAL INFECTION)</scope>
</reference>
<reference key="31">
    <citation type="journal article" date="2006" name="Microbiol. Mol. Biol. Rev.">
        <title>Impact of protein kinase PKR in cell biology: from antiviral to antiproliferative action.</title>
        <authorList>
            <person name="Garcia M.A."/>
            <person name="Gil J."/>
            <person name="Ventoso I."/>
            <person name="Guerra S."/>
            <person name="Domingo E."/>
            <person name="Rivas C."/>
            <person name="Esteban M."/>
        </authorList>
    </citation>
    <scope>REVIEW</scope>
</reference>
<reference key="32">
    <citation type="journal article" date="2006" name="J. Virol.">
        <title>Binding and nuclear relocalization of protein kinase R by human cytomegalovirus TRS1.</title>
        <authorList>
            <person name="Hakki M."/>
            <person name="Marshall E.E."/>
            <person name="De Niro K.L."/>
            <person name="Geballe A.P."/>
        </authorList>
    </citation>
    <scope>INTERACTION WITH HCMV TRS1 (MICROBIAL INFECTION)</scope>
</reference>
<reference key="33">
    <citation type="journal article" date="2006" name="Proc. Natl. Acad. Sci. U.S.A.">
        <title>Tyrosine phosphorylation acts as a molecular switch to full-scale activation of the eIF2alpha RNA-dependent protein kinase.</title>
        <authorList>
            <person name="Su Q."/>
            <person name="Wang S."/>
            <person name="Baltzis D."/>
            <person name="Qu L.K."/>
            <person name="Wong A.H."/>
            <person name="Koromilas A.E."/>
        </authorList>
    </citation>
    <scope>PHOSPHORYLATION AT TYR-101; TYR-162 AND TYR-293</scope>
</reference>
<reference key="34">
    <citation type="journal article" date="2006" name="Mol. Cells">
        <title>Molecular and structural characterization of the domain 2 of hepatitis C virus non-structural protein 5A.</title>
        <authorList>
            <person name="Liang Y."/>
            <person name="Kang C.B."/>
            <person name="Yoon H.S."/>
        </authorList>
    </citation>
    <scope>INTERACTION WITH HCV NON-STRUCTURAL PROTEIN 5A (MICROBIAL INFECTION)</scope>
</reference>
<reference key="35">
    <citation type="journal article" date="2007" name="World J. Gastroenterol.">
        <title>Quasispecies evolution in NS5A region of hepatitis C virus genotype 1b during interferon or combined interferon-ribavirin therapy.</title>
        <authorList>
            <person name="Veillon P."/>
            <person name="Payan C."/>
            <person name="Le Guillou-Guillemette H."/>
            <person name="Gaudy C."/>
            <person name="Lunel F."/>
        </authorList>
    </citation>
    <scope>INTERACTION WITH HCV NON-STRUCTURAL PROTEIN 5A (MICROBIAL INFECTION)</scope>
</reference>
<reference key="36">
    <citation type="journal article" date="2007" name="Virus Res.">
        <title>Mapping of the interacting domains of hepatitis C virus core protein and the double-stranded RNA-activated protein kinase PKR.</title>
        <authorList>
            <person name="Yan X.B."/>
            <person name="Battaglia S."/>
            <person name="Boucreux D."/>
            <person name="Chen Z."/>
            <person name="Brechot C."/>
            <person name="Pavio N."/>
        </authorList>
    </citation>
    <scope>INTERACTION WITH HCV MATURE CORE PROTEIN (MICROBIAL INFECTION)</scope>
</reference>
<reference key="37">
    <citation type="journal article" date="2007" name="J. Virol.">
        <title>Double-stranded RNA deaminase ADAR1 increases host susceptibility to virus infection.</title>
        <authorList>
            <person name="Nie Y."/>
            <person name="Hammond G.L."/>
            <person name="Yang J.H."/>
        </authorList>
    </citation>
    <scope>INTERACTION WITH ADAR</scope>
</reference>
<reference key="38">
    <citation type="journal article" date="2007" name="Trends Biochem. Sci.">
        <title>Activation of PKR: an open and shut case?</title>
        <authorList>
            <person name="Cole J.L."/>
        </authorList>
    </citation>
    <scope>REVIEW ON ACTIVITY REGULATION</scope>
</reference>
<reference key="39">
    <citation type="journal article" date="2008" name="Biochem. Biophys. Res. Commun.">
        <title>Nck-1 interacts with PKR and modulates its activation by dsRNA.</title>
        <authorList>
            <person name="Cardin E."/>
            <person name="Larose L."/>
        </authorList>
    </citation>
    <scope>FUNCTION</scope>
    <scope>INTERACTION WITH NCK1</scope>
    <scope>ACTIVITY REGULATION</scope>
</reference>
<reference key="40">
    <citation type="journal article" date="2008" name="Nucleic Acids Res.">
        <title>Interaction of human tRNA-dihydrouridine synthase-2 with interferon-induced protein kinase PKR.</title>
        <authorList>
            <person name="Mittelstadt M."/>
            <person name="Frump A."/>
            <person name="Khuu T."/>
            <person name="Fowlkes V."/>
            <person name="Handy I."/>
            <person name="Patel C.V."/>
            <person name="Patel R.C."/>
        </authorList>
    </citation>
    <scope>INTERACTION WITH DUS2L</scope>
    <scope>ACTIVITY REGULATION</scope>
</reference>
<reference key="41">
    <citation type="journal article" date="2008" name="Proc. Natl. Acad. Sci. U.S.A.">
        <title>A quantitative atlas of mitotic phosphorylation.</title>
        <authorList>
            <person name="Dephoure N."/>
            <person name="Zhou C."/>
            <person name="Villen J."/>
            <person name="Beausoleil S.A."/>
            <person name="Bakalarski C.E."/>
            <person name="Elledge S.J."/>
            <person name="Gygi S.P."/>
        </authorList>
    </citation>
    <scope>PHOSPHORYLATION [LARGE SCALE ANALYSIS] AT SER-83 AND SER-456</scope>
    <scope>IDENTIFICATION BY MASS SPECTROMETRY [LARGE SCALE ANALYSIS]</scope>
    <source>
        <tissue>Cervix carcinoma</tissue>
    </source>
</reference>
<reference key="42">
    <citation type="journal article" date="2008" name="Proc. Natl. Acad. Sci. U.S.A.">
        <title>Protein kinase PKR mutants resistant to the poxvirus pseudosubstrate K3L protein.</title>
        <authorList>
            <person name="Seo E.J."/>
            <person name="Liu F."/>
            <person name="Kawagishi-Kobayashi M."/>
            <person name="Ung T.L."/>
            <person name="Cao C."/>
            <person name="Dar A.C."/>
            <person name="Sicheri F."/>
            <person name="Dever T.E."/>
        </authorList>
    </citation>
    <scope>MUTAGENESIS OF ASP-486</scope>
    <scope>INTERACTION WITH VACCINIA VIRUS PROTEIN K3 (MICROBIAL INFECTION)</scope>
</reference>
<reference key="43">
    <citation type="journal article" date="2009" name="J. Cell. Physiol.">
        <title>PKR activity is required for acute leukemic cell maintenance and growth: a role for PKR-mediated phosphatase activity to regulate GSK-3 phosphorylation.</title>
        <authorList>
            <person name="Blalock W.L."/>
            <person name="Grimaldi C."/>
            <person name="Fala F."/>
            <person name="Follo M."/>
            <person name="Horn S."/>
            <person name="Basecke J."/>
            <person name="Martinelli G."/>
            <person name="Cocco L."/>
            <person name="Martelli A.M."/>
        </authorList>
    </citation>
    <scope>FUNCTION</scope>
</reference>
<reference key="44">
    <citation type="journal article" date="2009" name="PLoS Pathog.">
        <title>An antiviral response directed by PKR phosphorylation of the RNA helicase A.</title>
        <authorList>
            <person name="Sadler A.J."/>
            <person name="Latchoumanin O."/>
            <person name="Hawkes D."/>
            <person name="Mak J."/>
            <person name="Williams B.R."/>
        </authorList>
    </citation>
    <scope>FUNCTION</scope>
    <scope>INTERACTION WITH DHX9</scope>
</reference>
<reference key="45">
    <citation type="journal article" date="2009" name="Sci. Signal.">
        <title>Quantitative phosphoproteomic analysis of T cell receptor signaling reveals system-wide modulation of protein-protein interactions.</title>
        <authorList>
            <person name="Mayya V."/>
            <person name="Lundgren D.H."/>
            <person name="Hwang S.-I."/>
            <person name="Rezaul K."/>
            <person name="Wu L."/>
            <person name="Eng J.K."/>
            <person name="Rodionov V."/>
            <person name="Han D.K."/>
        </authorList>
    </citation>
    <scope>PHOSPHORYLATION [LARGE SCALE ANALYSIS] AT SER-83</scope>
    <scope>IDENTIFICATION BY MASS SPECTROMETRY [LARGE SCALE ANALYSIS]</scope>
    <source>
        <tissue>Leukemic T-cell</tissue>
    </source>
</reference>
<reference key="46">
    <citation type="journal article" date="2009" name="Virus Res.">
        <title>PKR protein kinase is activated by hepatitis C virus and inhibits viral replication through translational control.</title>
        <authorList>
            <person name="Kang J.I."/>
            <person name="Kwon S.N."/>
            <person name="Park S.H."/>
            <person name="Kim Y.K."/>
            <person name="Choi S.Y."/>
            <person name="Kim J.P."/>
            <person name="Ahn B.Y."/>
        </authorList>
    </citation>
    <scope>FUNCTION IN HCV RESTRICTION</scope>
</reference>
<reference key="47">
    <citation type="journal article" date="2010" name="Cytokine">
        <title>A role for protein kinase PKR in the mediation of Epstein-Barr virus latent membrane protein-1-induced IL-6 and IL-10 expression.</title>
        <authorList>
            <person name="Lin S.S."/>
            <person name="Lee D.C."/>
            <person name="Law A.H."/>
            <person name="Fang J.W."/>
            <person name="Chua D.T."/>
            <person name="Lau A.S."/>
        </authorList>
    </citation>
    <scope>FUNCTION</scope>
</reference>
<reference key="48">
    <citation type="journal article" date="2010" name="EMBO Rep.">
        <title>New Cdc2 Tyr 4 phosphorylation by dsRNA-activated protein kinase triggers Cdc2 polyubiquitination and G2 arrest under genotoxic stresses.</title>
        <authorList>
            <person name="Yoon C.-H."/>
            <person name="Miah M.A."/>
            <person name="Kim K.P."/>
            <person name="Bae Y.-S."/>
        </authorList>
    </citation>
    <scope>FUNCTION AS CDK1 KINASE UPON DNA DAMAGE</scope>
    <scope>FUNCTION AS TYROSINE-PROTEIN KINASE</scope>
</reference>
<reference key="49">
    <citation type="journal article" date="2010" name="Genes Dev.">
        <title>Phosphorylation of the NFAR proteins by the dsRNA-dependent protein kinase PKR constitutes a novel mechanism of translational regulation and cellular defense.</title>
        <authorList>
            <person name="Harashima A."/>
            <person name="Guettouche T."/>
            <person name="Barber G.N."/>
        </authorList>
    </citation>
    <scope>FUNCTION</scope>
</reference>
<reference key="50">
    <citation type="journal article" date="2010" name="J. Biol. Chem.">
        <title>Respiratory syncytial virus limits alpha subunit of eukaryotic translation initiation factor 2 (eIF2alpha) phosphorylation to maintain translation and viral replication.</title>
        <authorList>
            <person name="Groskreutz D.J."/>
            <person name="Babor E.C."/>
            <person name="Monick M.M."/>
            <person name="Varga S.M."/>
            <person name="Hunninghake G.W."/>
        </authorList>
    </citation>
    <scope>INTERACTION WITH HRSV NUCLEOPROTEIN (MICROBIAL INFECTION)</scope>
</reference>
<reference key="51">
    <citation type="journal article" date="2010" name="Liver Int.">
        <title>Double-stranded RNA-activated protein kinase inhibits hepatitis C virus replication but may be not essential in interferon treatment.</title>
        <authorList>
            <person name="Chang J.H."/>
            <person name="Kato N."/>
            <person name="Muroyama R."/>
            <person name="Taniguchi H."/>
            <person name="Guleng B."/>
            <person name="Dharel N."/>
            <person name="Shao R.X."/>
            <person name="Tateishi K."/>
            <person name="Jazag A."/>
            <person name="Kawabe T."/>
            <person name="Omata M."/>
        </authorList>
    </citation>
    <scope>FUNCTION IN HCV RESTRICTION</scope>
</reference>
<reference key="52">
    <citation type="journal article" date="2010" name="Mol. Biol. Cell">
        <title>The double-stranded RNA-dependent protein kinase differentially regulates insulin receptor substrates 1 and 2 in HepG2 cells.</title>
        <authorList>
            <person name="Yang X."/>
            <person name="Nath A."/>
            <person name="Opperman M.J."/>
            <person name="Chan C."/>
        </authorList>
    </citation>
    <scope>FUNCTION</scope>
    <scope>PHOSPHORYLATION AT THR-451</scope>
</reference>
<reference key="53">
    <citation type="journal article" date="2010" name="Sci. Signal.">
        <title>Quantitative phosphoproteomics reveals widespread full phosphorylation site occupancy during mitosis.</title>
        <authorList>
            <person name="Olsen J.V."/>
            <person name="Vermeulen M."/>
            <person name="Santamaria A."/>
            <person name="Kumar C."/>
            <person name="Miller M.L."/>
            <person name="Jensen L.J."/>
            <person name="Gnad F."/>
            <person name="Cox J."/>
            <person name="Jensen T.S."/>
            <person name="Nigg E.A."/>
            <person name="Brunak S."/>
            <person name="Mann M."/>
        </authorList>
    </citation>
    <scope>PHOSPHORYLATION [LARGE SCALE ANALYSIS] AT SER-83</scope>
    <scope>IDENTIFICATION BY MASS SPECTROMETRY [LARGE SCALE ANALYSIS]</scope>
    <source>
        <tissue>Cervix carcinoma</tissue>
    </source>
</reference>
<reference key="54">
    <citation type="journal article" date="2011" name="BMC Syst. Biol.">
        <title>Initial characterization of the human central proteome.</title>
        <authorList>
            <person name="Burkard T.R."/>
            <person name="Planyavsky M."/>
            <person name="Kaupe I."/>
            <person name="Breitwieser F.P."/>
            <person name="Buerckstuemmer T."/>
            <person name="Bennett K.L."/>
            <person name="Superti-Furga G."/>
            <person name="Colinge J."/>
        </authorList>
    </citation>
    <scope>IDENTIFICATION BY MASS SPECTROMETRY [LARGE SCALE ANALYSIS]</scope>
</reference>
<reference key="55">
    <citation type="journal article" date="2011" name="Brain Pathol.">
        <title>Modulation of tau phosphorylation by the kinase PKR: implications in Alzheimer's disease.</title>
        <authorList>
            <person name="Bose A."/>
            <person name="Mouton-Liger F."/>
            <person name="Paquet C."/>
            <person name="Mazot P."/>
            <person name="Vigny M."/>
            <person name="Gray F."/>
            <person name="Hugon J."/>
        </authorList>
    </citation>
    <scope>SUBCELLULAR LOCATION</scope>
    <scope>TISSUE SPECIFICITY</scope>
    <scope>PHOSPHORYLATION</scope>
</reference>
<reference key="56">
    <citation type="journal article" date="2011" name="Curr. Opin. Immunol.">
        <title>Protein kinase PKR and RNA adenosine deaminase ADAR1: new roles for old players as modulators of the interferon response.</title>
        <authorList>
            <person name="Pfaller C.K."/>
            <person name="Li Z."/>
            <person name="George C.X."/>
            <person name="Samuel C.E."/>
        </authorList>
    </citation>
    <scope>REVIEW</scope>
</reference>
<reference key="57">
    <citation type="journal article" date="2011" name="J. Interferon Cytokine Res.">
        <title>The role of protein kinase R in the interferon response.</title>
        <authorList>
            <person name="Pindel A."/>
            <person name="Sadler A."/>
        </authorList>
    </citation>
    <scope>REVIEW</scope>
</reference>
<reference key="58">
    <citation type="journal article" date="2011" name="Leukemia">
        <title>Multiple forms of PKR present in the nuclei of acute leukemia cells represent an active kinase that is responsive to stress.</title>
        <authorList>
            <person name="Blalock W.L."/>
            <person name="Bavelloni A."/>
            <person name="Piazzi M."/>
            <person name="Tagliavini F."/>
            <person name="Faenza I."/>
            <person name="Martelli A.M."/>
            <person name="Follo M.Y."/>
            <person name="Cocco L."/>
        </authorList>
    </citation>
    <scope>FUNCTION</scope>
    <scope>SUBCELLULAR LOCATION</scope>
    <scope>IDENTIFICATION BY MASS SPECTROMETRY</scope>
    <scope>PHOSPHORYLATION</scope>
</reference>
<reference key="59">
    <citation type="journal article" date="2011" name="Mol. Cells">
        <title>PKR-dependent mechanisms of interferon-? for inhibiting hepatitis B virus replication.</title>
        <authorList>
            <person name="Park I.H."/>
            <person name="Baek K.W."/>
            <person name="Cho E.Y."/>
            <person name="Ahn B.Y."/>
        </authorList>
    </citation>
    <scope>FUNCTION IN HBV RESTRICTION</scope>
</reference>
<reference key="60">
    <citation type="journal article" date="2012" name="Cell Cycle">
        <title>The RAX/PACT-PKR stress response pathway promotes p53 sumoylation and activation, leading to G(1) arrest.</title>
        <authorList>
            <person name="Bennett R.L."/>
            <person name="Pan Y."/>
            <person name="Christian J."/>
            <person name="Hui T."/>
            <person name="May W.S. Jr."/>
        </authorList>
    </citation>
    <scope>FUNCTION</scope>
    <scope>SUBCELLULAR LOCATION</scope>
</reference>
<reference key="61">
    <citation type="journal article" date="2012" name="Immunity">
        <title>Penetration resistance: PKR's other talent.</title>
        <authorList>
            <person name="Lacy-Hulbert A."/>
            <person name="Stuart L.M."/>
        </authorList>
    </citation>
    <scope>REVIEW</scope>
</reference>
<reference key="62">
    <citation type="journal article" date="2012" name="J. Biol. Chem.">
        <title>Protein kinase PKR amplification of interferon beta induction occurs through initiation factor eIF-2alpha-mediated translational control.</title>
        <authorList>
            <person name="McAllister C.S."/>
            <person name="Taghavi N."/>
            <person name="Samuel C.E."/>
        </authorList>
    </citation>
    <scope>FUNCTION</scope>
</reference>
<reference key="63">
    <citation type="journal article" date="2012" name="Mol. Cell">
        <title>Cytoplasmic STAT3 represses autophagy by inhibiting PKR activity.</title>
        <authorList>
            <person name="Shen S."/>
            <person name="Niso-Santano M."/>
            <person name="Adjemian S."/>
            <person name="Takehara T."/>
            <person name="Malik S.A."/>
            <person name="Minoux H."/>
            <person name="Souquere S."/>
            <person name="Marino G."/>
            <person name="Lachkar S."/>
            <person name="Senovilla L."/>
            <person name="Galluzzi L."/>
            <person name="Kepp O."/>
            <person name="Pierron G."/>
            <person name="Maiuri M.C."/>
            <person name="Hikita H."/>
            <person name="Kroemer R."/>
            <person name="Kroemer G."/>
        </authorList>
    </citation>
    <scope>FUNCTION</scope>
    <scope>INTERACTION WITH STAT3</scope>
</reference>
<reference key="64">
    <citation type="journal article" date="2012" name="Mol. Cell. Proteomics">
        <title>Comparative large-scale characterisation of plant vs. mammal proteins reveals similar and idiosyncratic N-alpha acetylation features.</title>
        <authorList>
            <person name="Bienvenut W.V."/>
            <person name="Sumpton D."/>
            <person name="Martinez A."/>
            <person name="Lilla S."/>
            <person name="Espagne C."/>
            <person name="Meinnel T."/>
            <person name="Giglione C."/>
        </authorList>
    </citation>
    <scope>ACETYLATION [LARGE SCALE ANALYSIS] AT ALA-2</scope>
    <scope>CLEAVAGE OF INITIATOR METHIONINE [LARGE SCALE ANALYSIS]</scope>
    <scope>IDENTIFICATION BY MASS SPECTROMETRY [LARGE SCALE ANALYSIS]</scope>
</reference>
<reference key="65">
    <citation type="journal article" date="2012" name="Nature">
        <title>Novel role of PKR in inflammasome activation and HMGB1 release.</title>
        <authorList>
            <person name="Lu B."/>
            <person name="Nakamura T."/>
            <person name="Inouye K."/>
            <person name="Li J."/>
            <person name="Tang Y."/>
            <person name="Lundbaeck P."/>
            <person name="Valdes-Ferrer S.I."/>
            <person name="Olofsson P.S."/>
            <person name="Kalb T."/>
            <person name="Roth J."/>
            <person name="Zou Y."/>
            <person name="Erlandsson-Harris H."/>
            <person name="Yang H."/>
            <person name="Ting J.P."/>
            <person name="Wang H."/>
            <person name="Andersson U."/>
            <person name="Antoine D.J."/>
            <person name="Chavan S.S."/>
            <person name="Hotamisligil G.S."/>
            <person name="Tracey K.J."/>
        </authorList>
    </citation>
    <scope>FUNCTION</scope>
    <scope>INTERACTION WITH NLRP1; NLRP3; NLRC4 AND AIM2</scope>
    <scope>AUTOPHOSPHORYLATION</scope>
</reference>
<reference key="66">
    <citation type="journal article" date="2012" name="Proc. Natl. Acad. Sci. U.S.A.">
        <title>N-terminal acetylome analyses and functional insights of the N-terminal acetyltransferase NatB.</title>
        <authorList>
            <person name="Van Damme P."/>
            <person name="Lasa M."/>
            <person name="Polevoda B."/>
            <person name="Gazquez C."/>
            <person name="Elosegui-Artola A."/>
            <person name="Kim D.S."/>
            <person name="De Juan-Pardo E."/>
            <person name="Demeyer K."/>
            <person name="Hole K."/>
            <person name="Larrea E."/>
            <person name="Timmerman E."/>
            <person name="Prieto J."/>
            <person name="Arnesen T."/>
            <person name="Sherman F."/>
            <person name="Gevaert K."/>
            <person name="Aldabe R."/>
        </authorList>
    </citation>
    <scope>ACETYLATION [LARGE SCALE ANALYSIS] AT ALA-2</scope>
    <scope>CLEAVAGE OF INITIATOR METHIONINE [LARGE SCALE ANALYSIS]</scope>
    <scope>IDENTIFICATION BY MASS SPECTROMETRY [LARGE SCALE ANALYSIS]</scope>
</reference>
<reference key="67">
    <citation type="journal article" date="2012" name="Sci. Signal.">
        <title>PKR-dependent inflammatory signals.</title>
        <authorList>
            <person name="Kang R."/>
            <person name="Tang D."/>
        </authorList>
    </citation>
    <scope>REVIEW</scope>
</reference>
<reference key="68">
    <citation type="journal article" date="2012" name="Virology">
        <title>Protein kinase PKR catalytic activity is required for the PKR-dependent activation of mitogen-activated protein kinases and amplification of interferon beta induction following virus infection.</title>
        <authorList>
            <person name="Taghavi N."/>
            <person name="Samuel C.E."/>
        </authorList>
    </citation>
    <scope>FUNCTION</scope>
</reference>
<reference key="69">
    <citation type="journal article" date="2012" name="Viruses">
        <title>dsRNA-dependent protein kinase PKR and its role in stress, signaling and HCV infection.</title>
        <authorList>
            <person name="Dabo S."/>
            <person name="Meurs E.F."/>
        </authorList>
    </citation>
    <scope>REVIEW</scope>
</reference>
<reference key="70">
    <citation type="journal article" date="2013" name="Blood">
        <title>PKR regulates proliferation, differentiation and survival of murine hematopoietic stem/progenitor cells.</title>
        <authorList>
            <person name="Liu X."/>
            <person name="Bennett R.L."/>
            <person name="Cheng X."/>
            <person name="Byrne M."/>
            <person name="Reinhard M.K."/>
            <person name="May W.S. Jr."/>
        </authorList>
    </citation>
    <scope>TISSUE SPECIFICITY</scope>
</reference>
<reference key="71">
    <citation type="journal article" date="2013" name="Cell. Mol. Life Sci.">
        <title>The eIF2alpha kinases: their structures and functions.</title>
        <authorList>
            <person name="Donnelly N."/>
            <person name="Gorman A.M."/>
            <person name="Gupta S."/>
            <person name="Samali A."/>
        </authorList>
    </citation>
    <scope>REVIEW</scope>
</reference>
<reference key="72">
    <citation type="journal article" date="2013" name="J. Biol. Chem.">
        <title>Activation of double-stranded RNA-activated protein kinase (PKR) by interferon-stimulated gene 15 (ISG15) modification down-regulates protein translation.</title>
        <authorList>
            <person name="Okumura F."/>
            <person name="Okumura A.J."/>
            <person name="Uematsu K."/>
            <person name="Hatakeyama S."/>
            <person name="Zhang D.E."/>
            <person name="Kamura T."/>
        </authorList>
    </citation>
    <scope>FUNCTION</scope>
    <scope>ISGYLATION AT LYS-69 AND LYS-159</scope>
    <scope>ACTIVITY REGULATION</scope>
</reference>
<reference key="73">
    <citation type="journal article" date="2013" name="J. Proteome Res.">
        <title>Toward a comprehensive characterization of a human cancer cell phosphoproteome.</title>
        <authorList>
            <person name="Zhou H."/>
            <person name="Di Palma S."/>
            <person name="Preisinger C."/>
            <person name="Peng M."/>
            <person name="Polat A.N."/>
            <person name="Heck A.J."/>
            <person name="Mohammed S."/>
        </authorList>
    </citation>
    <scope>PHOSPHORYLATION [LARGE SCALE ANALYSIS] AT SER-542</scope>
    <scope>IDENTIFICATION BY MASS SPECTROMETRY [LARGE SCALE ANALYSIS]</scope>
    <source>
        <tissue>Cervix carcinoma</tissue>
        <tissue>Erythroleukemia</tissue>
    </source>
</reference>
<reference key="74">
    <citation type="journal article" date="2013" name="J. Virol.">
        <title>Toscana virus NSs protein promoftes degradation of double-stranded RNA-dependent protein kinase.</title>
        <authorList>
            <person name="Kalveram B."/>
            <person name="Ikegami T."/>
        </authorList>
    </citation>
    <scope>INTERACTION WITH TOSCANA VIRUS PROTEIN NSS (MICROBIAL INFECTION)</scope>
    <scope>ACTIVITY REGULATION</scope>
</reference>
<reference key="75">
    <citation type="journal article" date="2013" name="J. Virol.">
        <title>Stress granule formation induced by measles virus is protein kinase PKR dependent and impaired by RNA adenosine deaminase ADAR1.</title>
        <authorList>
            <person name="Okonski K.M."/>
            <person name="Samuel C.E."/>
        </authorList>
    </citation>
    <scope>FUNCTION IN MV RESTRICTION</scope>
</reference>
<reference key="76">
    <citation type="journal article" date="2013" name="PLoS ONE">
        <title>Protein kinase regulated by dsRNA downregulates the interferon production in dengue virus- and dsrna-stimulated human lung epithelial cells.</title>
        <authorList>
            <person name="Li Y."/>
            <person name="Xie J."/>
            <person name="Wu S."/>
            <person name="Xia J."/>
            <person name="Zhang P."/>
            <person name="Liu C."/>
            <person name="Zhang P."/>
            <person name="Huang X."/>
        </authorList>
    </citation>
    <scope>FUNCTION</scope>
</reference>
<reference key="77">
    <citation type="journal article" date="2013" name="Virology">
        <title>The modulation of hepatitis C virus 1a replication by PKR is dependent on NF-kB mediated interferon beta response in Huh7.5.1 cells.</title>
        <authorList>
            <person name="Zhang L."/>
            <person name="Alter H.J."/>
            <person name="Wang H."/>
            <person name="Jia S."/>
            <person name="Wang E."/>
            <person name="Marincola F.M."/>
            <person name="Shih J.W."/>
            <person name="Wang R.Y."/>
        </authorList>
    </citation>
    <scope>FUNCTION IN HCV RESTRICTION</scope>
</reference>
<reference key="78">
    <citation type="journal article" date="2014" name="J. Proteomics">
        <title>An enzyme assisted RP-RPLC approach for in-depth analysis of human liver phosphoproteome.</title>
        <authorList>
            <person name="Bian Y."/>
            <person name="Song C."/>
            <person name="Cheng K."/>
            <person name="Dong M."/>
            <person name="Wang F."/>
            <person name="Huang J."/>
            <person name="Sun D."/>
            <person name="Wang L."/>
            <person name="Ye M."/>
            <person name="Zou H."/>
        </authorList>
    </citation>
    <scope>IDENTIFICATION BY MASS SPECTROMETRY [LARGE SCALE ANALYSIS]</scope>
    <source>
        <tissue>Liver</tissue>
    </source>
</reference>
<reference key="79">
    <citation type="journal article" date="2015" name="J. Virol.">
        <title>Mutational analysis of vaccinia virus E3 protein: the biological functions do not correlate with its biochemical capacity to bind double-stranded RNA.</title>
        <authorList>
            <person name="Dueck K.J."/>
            <person name="Hu Y.S."/>
            <person name="Chen P."/>
            <person name="Deschambault Y."/>
            <person name="Lee J."/>
            <person name="Varga J."/>
            <person name="Cao J."/>
        </authorList>
    </citation>
    <scope>INTERACTION WITH VACCINIA VIRUS PROTEIN E3 (MICROBIAL INFECTION)</scope>
</reference>
<reference key="80">
    <citation type="journal article" date="2016" name="PLoS Pathog.">
        <title>A Single Amino Acid Dictates Protein Kinase R Susceptibility to Unrelated Viral Antagonists.</title>
        <authorList>
            <person name="Carpentier K.S."/>
            <person name="Esparo N.M."/>
            <person name="Child S.J."/>
            <person name="Geballe A.P."/>
        </authorList>
    </citation>
    <scope>MUTAGENESIS OF PHE-489; THR-496; ILE-502; LYS-510 AND GLN-516</scope>
    <scope>CHARACTERIZATION OF VARIANT VAL-506</scope>
    <scope>INTERACTION WITH HCMV TRS1 (MICROBIAL INFECTION)</scope>
</reference>
<reference key="81">
    <citation type="journal article" date="2017" name="PLoS Pathog.">
        <title>KSHV inhibits stress granule formation by viral ORF57 blocking PKR activation.</title>
        <authorList>
            <person name="Sharma N.R."/>
            <person name="Majerciak V."/>
            <person name="Kruhlak M.J."/>
            <person name="Zheng Z.M."/>
        </authorList>
    </citation>
    <scope>INTERACTION WITH HUMAN HERPES VIRUS 8 PROTEIN KTA/ORF57 (MICROBIAL INFECTION)</scope>
</reference>
<reference evidence="74" key="82">
    <citation type="journal article" date="1998" name="EMBO J.">
        <title>Structure of the double-stranded RNA-binding domain of the protein kinase PKR reveals the molecular basis of its dsRNA-mediated activation.</title>
        <authorList>
            <person name="Nanduri S."/>
            <person name="Carpick B.W."/>
            <person name="Yang Y."/>
            <person name="Williams B.R.G."/>
            <person name="Qin J."/>
        </authorList>
    </citation>
    <scope>STRUCTURE BY NMR OF 1-170</scope>
    <scope>DOMAIN</scope>
</reference>
<reference evidence="75 76" key="83">
    <citation type="journal article" date="2005" name="Cell">
        <title>Higher-order substrate recognition of eIF2alpha by the RNA-dependent protein kinase PKR.</title>
        <authorList>
            <person name="Dar A.C."/>
            <person name="Dever T.E."/>
            <person name="Sicheri F."/>
        </authorList>
    </citation>
    <scope>X-RAY CRYSTALLOGRAPHY (2.50 ANGSTROMS) OF 258-550 IN COMPLEX WITH EIF2S1/EIF-2ALPHA</scope>
    <scope>PHOSPHORYLATION AT THR-446</scope>
    <scope>DOMAIN</scope>
    <scope>SUBUNIT</scope>
    <scope>COFACTOR</scope>
    <scope>INTERACTION WITH EIF2S1/EIF-2ALPHA</scope>
</reference>
<reference evidence="77 78" key="84">
    <citation type="journal article" date="2019" name="Biochemistry">
        <title>Structural Basis of Protein Kinase R Autophosphorylation.</title>
        <authorList>
            <person name="Mayo C.B."/>
            <person name="Erlandsen H."/>
            <person name="Mouser D.J."/>
            <person name="Feinstein A.G."/>
            <person name="Robinson V.L."/>
            <person name="May E.R."/>
            <person name="Cole J.L."/>
        </authorList>
    </citation>
    <scope>X-RAY CRYSTALLOGRAPHY (2.60 ANGSTROMS) OF 229-551</scope>
    <scope>SUBUNIT</scope>
</reference>
<reference key="85">
    <citation type="journal article" date="2020" name="Am. J. Hum. Genet.">
        <title>De novo EIF2AK1 and EIF2AK2 variants are associated with developmental delay, leukoencephalopathy, and neurologic decompensation.</title>
        <authorList>
            <consortium name="Undiagnosed Diseases Network"/>
            <person name="Mao D."/>
            <person name="Reuter C.M."/>
            <person name="Ruzhnikov M.R.Z."/>
            <person name="Beck A.E."/>
            <person name="Farrow E.G."/>
            <person name="Emrick L.T."/>
            <person name="Rosenfeld J.A."/>
            <person name="Mackenzie K.M."/>
            <person name="Robak L."/>
            <person name="Wheeler M.T."/>
            <person name="Burrage L.C."/>
            <person name="Jain M."/>
            <person name="Liu P."/>
            <person name="Calame D."/>
            <person name="Kuery S."/>
            <person name="Sillesen M."/>
            <person name="Schmitz-Abe K."/>
            <person name="Tonduti D."/>
            <person name="Spaccini L."/>
            <person name="Iascone M."/>
            <person name="Genetti C.A."/>
            <person name="Koenig M.K."/>
            <person name="Graf M."/>
            <person name="Tran A."/>
            <person name="Alejandro M."/>
            <person name="Lee B.H."/>
            <person name="Thiffault I."/>
            <person name="Agrawal P.B."/>
            <person name="Bernstein J.A."/>
            <person name="Bellen H.J."/>
            <person name="Chao H.T."/>
        </authorList>
    </citation>
    <scope>INVOLVEMENT IN LEUDEN</scope>
    <scope>FUNCTION</scope>
    <scope>VARIANTS LEUDEN LEU-11; SER-32; PHE-97; SER-109; VAL-109; PHE-133; SER-325 AND CYS-461</scope>
    <scope>CHARACTERIZATION OF VARIANTS LEUDEN LEU-11; PHE-133 AND CYS-461</scope>
    <scope>VARIANT GLN-114</scope>
</reference>
<reference key="86">
    <citation type="journal article" date="2007" name="Nature">
        <title>Patterns of somatic mutation in human cancer genomes.</title>
        <authorList>
            <person name="Greenman C."/>
            <person name="Stephens P."/>
            <person name="Smith R."/>
            <person name="Dalgliesh G.L."/>
            <person name="Hunter C."/>
            <person name="Bignell G."/>
            <person name="Davies H."/>
            <person name="Teague J."/>
            <person name="Butler A."/>
            <person name="Stevens C."/>
            <person name="Edkins S."/>
            <person name="O'Meara S."/>
            <person name="Vastrik I."/>
            <person name="Schmidt E.E."/>
            <person name="Avis T."/>
            <person name="Barthorpe S."/>
            <person name="Bhamra G."/>
            <person name="Buck G."/>
            <person name="Choudhury B."/>
            <person name="Clements J."/>
            <person name="Cole J."/>
            <person name="Dicks E."/>
            <person name="Forbes S."/>
            <person name="Gray K."/>
            <person name="Halliday K."/>
            <person name="Harrison R."/>
            <person name="Hills K."/>
            <person name="Hinton J."/>
            <person name="Jenkinson A."/>
            <person name="Jones D."/>
            <person name="Menzies A."/>
            <person name="Mironenko T."/>
            <person name="Perry J."/>
            <person name="Raine K."/>
            <person name="Richardson D."/>
            <person name="Shepherd R."/>
            <person name="Small A."/>
            <person name="Tofts C."/>
            <person name="Varian J."/>
            <person name="Webb T."/>
            <person name="West S."/>
            <person name="Widaa S."/>
            <person name="Yates A."/>
            <person name="Cahill D.P."/>
            <person name="Louis D.N."/>
            <person name="Goldstraw P."/>
            <person name="Nicholson A.G."/>
            <person name="Brasseur F."/>
            <person name="Looijenga L."/>
            <person name="Weber B.L."/>
            <person name="Chiew Y.-E."/>
            <person name="DeFazio A."/>
            <person name="Greaves M.F."/>
            <person name="Green A.R."/>
            <person name="Campbell P."/>
            <person name="Birney E."/>
            <person name="Easton D.F."/>
            <person name="Chenevix-Trench G."/>
            <person name="Tan M.-H."/>
            <person name="Khoo S.K."/>
            <person name="Teh B.T."/>
            <person name="Yuen S.T."/>
            <person name="Leung S.Y."/>
            <person name="Wooster R."/>
            <person name="Futreal P.A."/>
            <person name="Stratton M.R."/>
        </authorList>
    </citation>
    <scope>VARIANTS [LARGE SCALE ANALYSIS] GLU-428; VAL-439 AND VAL-506</scope>
</reference>
<reference key="87">
    <citation type="journal article" date="2021" name="Ann. Neurol.">
        <title>EIF2AK2 Missense Variants Associated with Early Onset Generalized Dystonia.</title>
        <authorList>
            <person name="Kuipers D.J.S."/>
            <person name="Mandemakers W."/>
            <person name="Lu C.S."/>
            <person name="Olgiati S."/>
            <person name="Breedveld G.J."/>
            <person name="Fevga C."/>
            <person name="Tadic V."/>
            <person name="Carecchio M."/>
            <person name="Osterman B."/>
            <person name="Sagi-Dain L."/>
            <person name="Wu-Chou Y.H."/>
            <person name="Chen C.C."/>
            <person name="Chang H.C."/>
            <person name="Wu S.L."/>
            <person name="Yeh T.H."/>
            <person name="Weng Y.H."/>
            <person name="Elia A.E."/>
            <person name="Panteghini C."/>
            <person name="Marotta N."/>
            <person name="Pauly M.G."/>
            <person name="Kuehn A.A."/>
            <person name="Volkmann J."/>
            <person name="Lace B."/>
            <person name="Meijer I.A."/>
            <person name="Kandaswamy K."/>
            <person name="Quadri M."/>
            <person name="Garavaglia B."/>
            <person name="Lohmann K."/>
            <person name="Bauer P."/>
            <person name="Mencacci N.E."/>
            <person name="Lubbe S.J."/>
            <person name="Klein C."/>
            <person name="Bertoli-Avella A.M."/>
            <person name="Bonifati V."/>
        </authorList>
    </citation>
    <scope>VARIANTS DYT33 THR-32; ARG-130 AND ALA-138</scope>
    <scope>CHARACTERIZATION OF VARIANTS DYT33 THR-32 AND ARG-130</scope>
    <scope>INVOLVEMENT IN DYT33</scope>
</reference>
<reference key="88">
    <citation type="journal article" date="2021" name="Ann. Neurol.">
        <title>A Recurrent EIF2AK2 Missense Variant Causes Autosomal-Dominant Isolated Dystonia.</title>
        <authorList>
            <person name="Musacchio T."/>
            <person name="Zech M."/>
            <person name="Reich M.M."/>
            <person name="Winkelmann J."/>
            <person name="Volkmann J."/>
        </authorList>
    </citation>
    <scope>VARIANT DYT33 ARG-130</scope>
    <scope>INVOLVEMENT IN DYT33</scope>
</reference>
<reference key="89">
    <citation type="journal article" date="2022" name="Mov. Disord. Clin. Pract.">
        <title>Heterozygous EIF2AK2 Variant Causes Adolescence-Onset Generalized Dystonia Partially Responsive to DBS.</title>
        <authorList>
            <person name="Magrinelli F."/>
            <person name="Moualek D."/>
            <person name="Tazir M."/>
            <person name="Pacha L.A."/>
            <person name="Verghese A."/>
            <person name="Bhatia K.P."/>
            <person name="Maroofian R."/>
            <person name="Houlden H."/>
        </authorList>
    </citation>
    <scope>VARIANT DYT33 ARG-130</scope>
</reference>
<organism>
    <name type="scientific">Homo sapiens</name>
    <name type="common">Human</name>
    <dbReference type="NCBI Taxonomy" id="9606"/>
    <lineage>
        <taxon>Eukaryota</taxon>
        <taxon>Metazoa</taxon>
        <taxon>Chordata</taxon>
        <taxon>Craniata</taxon>
        <taxon>Vertebrata</taxon>
        <taxon>Euteleostomi</taxon>
        <taxon>Mammalia</taxon>
        <taxon>Eutheria</taxon>
        <taxon>Euarchontoglires</taxon>
        <taxon>Primates</taxon>
        <taxon>Haplorrhini</taxon>
        <taxon>Catarrhini</taxon>
        <taxon>Hominidae</taxon>
        <taxon>Homo</taxon>
    </lineage>
</organism>
<accession>P19525</accession>
<accession>A8K3P0</accession>
<accession>D6W584</accession>
<accession>E9PC80</accession>
<accession>Q52M43</accession>
<accession>Q7Z6F6</accession>
<accession>Q9UIR4</accession>
<protein>
    <recommendedName>
        <fullName>Interferon-induced, double-stranded RNA-activated protein kinase</fullName>
        <ecNumber>2.7.11.1</ecNumber>
    </recommendedName>
    <alternativeName>
        <fullName>Eukaryotic translation initiation factor 2-alpha kinase 2</fullName>
        <shortName>eIF-2A protein kinase 2</shortName>
    </alternativeName>
    <alternativeName>
        <fullName>Interferon-inducible RNA-dependent protein kinase</fullName>
    </alternativeName>
    <alternativeName>
        <fullName>P1/eIF-2A protein kinase</fullName>
    </alternativeName>
    <alternativeName>
        <fullName>Protein kinase RNA-activated</fullName>
        <shortName>PKR</shortName>
        <shortName evidence="67">Protein kinase R</shortName>
    </alternativeName>
    <alternativeName>
        <fullName>Tyrosine-protein kinase EIF2AK2</fullName>
        <ecNumber>2.7.10.2</ecNumber>
    </alternativeName>
    <alternativeName>
        <fullName>p68 kinase</fullName>
    </alternativeName>
</protein>
<feature type="initiator methionine" description="Removed" evidence="66 82 83">
    <location>
        <position position="1"/>
    </location>
</feature>
<feature type="chain" id="PRO_0000085945" description="Interferon-induced, double-stranded RNA-activated protein kinase">
    <location>
        <begin position="2"/>
        <end position="551"/>
    </location>
</feature>
<feature type="domain" description="DRBM 1" evidence="3 64">
    <location>
        <begin position="9"/>
        <end position="77"/>
    </location>
</feature>
<feature type="domain" description="DRBM 2" evidence="3 64">
    <location>
        <begin position="100"/>
        <end position="167"/>
    </location>
</feature>
<feature type="domain" description="Protein kinase" evidence="2">
    <location>
        <begin position="267"/>
        <end position="538"/>
    </location>
</feature>
<feature type="repeat" description="1">
    <location>
        <begin position="331"/>
        <end position="343"/>
    </location>
</feature>
<feature type="repeat" description="2">
    <location>
        <begin position="345"/>
        <end position="357"/>
    </location>
</feature>
<feature type="region of interest" description="(Microbial infection) Interaction with HCV NS5A" evidence="23">
    <location>
        <begin position="2"/>
        <end position="180"/>
    </location>
</feature>
<feature type="region of interest" description="Disordered" evidence="5">
    <location>
        <begin position="202"/>
        <end position="222"/>
    </location>
</feature>
<feature type="region of interest" description="Interaction with TRAF5" evidence="14">
    <location>
        <begin position="266"/>
        <end position="551"/>
    </location>
</feature>
<feature type="region of interest" description="Dimerization" evidence="17">
    <location>
        <begin position="266"/>
        <end position="362"/>
    </location>
</feature>
<feature type="region of interest" description="2 X 13 AA approximate repeats">
    <location>
        <begin position="331"/>
        <end position="357"/>
    </location>
</feature>
<feature type="region of interest" description="Interaction with EIF2S1/EIF-2ALPHA" evidence="17">
    <location>
        <begin position="379"/>
        <end position="496"/>
    </location>
</feature>
<feature type="compositionally biased region" description="Polar residues" evidence="5">
    <location>
        <begin position="202"/>
        <end position="215"/>
    </location>
</feature>
<feature type="active site" description="Proton acceptor" evidence="2 4">
    <location>
        <position position="414"/>
    </location>
</feature>
<feature type="binding site" evidence="2">
    <location>
        <begin position="273"/>
        <end position="281"/>
    </location>
    <ligand>
        <name>ATP</name>
        <dbReference type="ChEBI" id="CHEBI:30616"/>
    </ligand>
</feature>
<feature type="binding site">
    <location>
        <position position="296"/>
    </location>
    <ligand>
        <name>ATP</name>
        <dbReference type="ChEBI" id="CHEBI:30616"/>
    </ligand>
</feature>
<feature type="binding site" evidence="72 73">
    <location>
        <position position="432"/>
    </location>
    <ligand>
        <name>Mg(2+)</name>
        <dbReference type="ChEBI" id="CHEBI:18420"/>
    </ligand>
</feature>
<feature type="modified residue" description="N-acetylalanine" evidence="66 82 83">
    <location>
        <position position="2"/>
    </location>
</feature>
<feature type="modified residue" description="Phosphoserine" evidence="8 79 80 81">
    <location>
        <position position="83"/>
    </location>
</feature>
<feature type="modified residue" description="Phosphothreonine; by autocatalysis" evidence="71">
    <location>
        <position position="88"/>
    </location>
</feature>
<feature type="modified residue" description="Phosphothreonine; by autocatalysis" evidence="71">
    <location>
        <position position="89"/>
    </location>
</feature>
<feature type="modified residue" description="Phosphothreonine; by autocatalysis" evidence="71">
    <location>
        <position position="90"/>
    </location>
</feature>
<feature type="modified residue" description="Phosphotyrosine; by autocatalysis" evidence="18">
    <location>
        <position position="101"/>
    </location>
</feature>
<feature type="modified residue" description="Phosphotyrosine; by autocatalysis" evidence="18">
    <location>
        <position position="162"/>
    </location>
</feature>
<feature type="modified residue" description="Phosphoserine; by autocatalysis" evidence="71">
    <location>
        <position position="242"/>
    </location>
</feature>
<feature type="modified residue" description="Phosphothreonine; by autocatalysis" evidence="71">
    <location>
        <position position="255"/>
    </location>
</feature>
<feature type="modified residue" description="Phosphothreonine; by autocatalysis" evidence="71">
    <location>
        <position position="258"/>
    </location>
</feature>
<feature type="modified residue" description="Phosphotyrosine; by autocatalysis" evidence="18">
    <location>
        <position position="293"/>
    </location>
</feature>
<feature type="modified residue" description="Phosphothreonine; by autocatalysis" evidence="10 17">
    <location>
        <position position="446"/>
    </location>
</feature>
<feature type="modified residue" description="Phosphothreonine; by autocatalysis" evidence="10 36">
    <location>
        <position position="451"/>
    </location>
</feature>
<feature type="modified residue" description="Phosphoserine" evidence="79">
    <location>
        <position position="456"/>
    </location>
</feature>
<feature type="modified residue" description="Phosphoserine" evidence="84">
    <location>
        <position position="542"/>
    </location>
</feature>
<feature type="cross-link" description="Glycyl lysine isopeptide (Lys-Gly) (interchain with G-Cter in ISG15)" evidence="47">
    <location>
        <position position="69"/>
    </location>
</feature>
<feature type="cross-link" description="Glycyl lysine isopeptide (Lys-Gly) (interchain with G-Cter in ISG15)" evidence="47">
    <location>
        <position position="159"/>
    </location>
</feature>
<feature type="splice variant" id="VSP_046177" description="In isoform 2." evidence="69">
    <location>
        <begin position="263"/>
        <end position="303"/>
    </location>
</feature>
<feature type="sequence variant" id="VAR_084260" description="In LEUDEN; uncertain significance; reduced phosphorylation of eukaryotic translation initiation factor 2-alpha in patient cells." evidence="56">
    <original>M</original>
    <variation>L</variation>
    <location>
        <position position="11"/>
    </location>
</feature>
<feature type="sequence variant" id="VAR_084261" description="In LEUDEN; uncertain significance." evidence="56">
    <original>N</original>
    <variation>S</variation>
    <location>
        <position position="32"/>
    </location>
</feature>
<feature type="sequence variant" id="VAR_086715" description="In DYT33; uncertain significance; gain-of-function variant resulting in increased levels of phosphorylated EIF2AK2 and EIF2A in patient cells compared to controls." evidence="57">
    <original>N</original>
    <variation>T</variation>
    <location>
        <position position="32"/>
    </location>
</feature>
<feature type="sequence variant" id="VAR_084262" description="In LEUDEN; uncertain significance." evidence="56">
    <original>S</original>
    <variation>F</variation>
    <location>
        <position position="97"/>
    </location>
</feature>
<feature type="sequence variant" id="VAR_084263" description="In LEUDEN; uncertain significance." evidence="56">
    <original>A</original>
    <variation>S</variation>
    <location>
        <position position="109"/>
    </location>
</feature>
<feature type="sequence variant" id="VAR_084264" description="In LEUDEN; uncertain significance." evidence="56">
    <original>A</original>
    <variation>V</variation>
    <location>
        <position position="109"/>
    </location>
</feature>
<feature type="sequence variant" id="VAR_084265" description="Found in a patient with dysmorphic facies, syndactyly, congenital microcephaly and global developmental delay; uncertain significance." evidence="56">
    <original>L</original>
    <variation>Q</variation>
    <location>
        <position position="114"/>
    </location>
</feature>
<feature type="sequence variant" id="VAR_086716" description="In DYT33; gain-of-function variant resulting in increased levels of phosphorylated EIF2AK2 and EIF2A in patient cells compared to controls." evidence="57 58 59">
    <original>G</original>
    <variation>R</variation>
    <location>
        <position position="130"/>
    </location>
</feature>
<feature type="sequence variant" id="VAR_084266" description="In LEUDEN; uncertain significance; reduced phosphorylation of eukaryotic translation initiation factor 2-alpha in patient cells." evidence="56">
    <original>Y</original>
    <variation>F</variation>
    <location>
        <position position="133"/>
    </location>
</feature>
<feature type="sequence variant" id="VAR_086717" description="In DYT33; uncertain significance." evidence="57">
    <original>G</original>
    <variation>A</variation>
    <location>
        <position position="138"/>
    </location>
</feature>
<feature type="sequence variant" id="VAR_084267" description="In LEUDEN; uncertain significance." evidence="56">
    <original>G</original>
    <variation>S</variation>
    <location>
        <position position="325"/>
    </location>
</feature>
<feature type="sequence variant" id="VAR_040474" description="In dbSNP:rs56219559." evidence="24">
    <original>V</original>
    <variation>E</variation>
    <location>
        <position position="428"/>
    </location>
</feature>
<feature type="sequence variant" id="VAR_040475" description="In a lung adenocarcinoma sample; somatic mutation." evidence="24">
    <original>L</original>
    <variation>V</variation>
    <location>
        <position position="439"/>
    </location>
</feature>
<feature type="sequence variant" id="VAR_084268" description="In LEUDEN; uncertain significance; reduced phosphorylation of eukaryotic translation initiation factor 2-alpha in patient cells." evidence="56">
    <original>S</original>
    <variation>C</variation>
    <location>
        <position position="461"/>
    </location>
</feature>
<feature type="sequence variant" id="VAR_040476" description="No effect on PKR inhibition by HCMV protein TRS1; dbSNP:rs34821155." evidence="24 53">
    <original>I</original>
    <variation>V</variation>
    <location>
        <position position="506"/>
    </location>
</feature>
<feature type="mutagenesis site" description="In FL-PKR-2AI; moderate loss of activity but no effect on dsRNA binding." evidence="10">
    <original>SK</original>
    <variation>AA</variation>
    <location>
        <begin position="59"/>
        <end position="60"/>
    </location>
</feature>
<feature type="mutagenesis site" description="Impairs dsRNA binding but not dimerization or activity." evidence="10">
    <original>K</original>
    <variation>A</variation>
    <location>
        <position position="60"/>
    </location>
</feature>
<feature type="mutagenesis site" description="Significant loss of activity; loss of dsRNA binding and dimerization." evidence="10">
    <original>A</original>
    <variation>E</variation>
    <location>
        <position position="67"/>
    </location>
</feature>
<feature type="mutagenesis site" description="No effect on enzymatic activity; when associated with A-88; A-89 and A-90." evidence="8">
    <original>S</original>
    <variation>A</variation>
    <location>
        <position position="83"/>
    </location>
</feature>
<feature type="mutagenesis site" description="No effect on enzymatic activity; when associated with A-83; A-89 and A-90." evidence="8">
    <original>T</original>
    <variation>A</variation>
    <location>
        <position position="88"/>
    </location>
</feature>
<feature type="mutagenesis site" description="No effect on enzymatic activity; when associated with A-83; A-88 and A-90." evidence="8">
    <original>T</original>
    <variation>A</variation>
    <location>
        <position position="89"/>
    </location>
</feature>
<feature type="mutagenesis site" description="No effect on enzymatic activity; when associated with A-83; A-88 and A-89." evidence="8">
    <original>T</original>
    <variation>A</variation>
    <location>
        <position position="90"/>
    </location>
</feature>
<feature type="mutagenesis site" description="In FL-PKR-2AII; no effect on activity." evidence="10">
    <original>TK</original>
    <variation>AA</variation>
    <location>
        <begin position="149"/>
        <end position="150"/>
    </location>
</feature>
<feature type="mutagenesis site" description="Moderate loss of activity; when associated with A-255 and A-258." evidence="8">
    <original>S</original>
    <variation>A</variation>
    <location>
        <position position="242"/>
    </location>
</feature>
<feature type="mutagenesis site" description="Loss of activity." evidence="10">
    <location>
        <begin position="244"/>
        <end position="296"/>
    </location>
</feature>
<feature type="mutagenesis site" description="Moderate loss of activity; when associated with A-242 and A-255." evidence="8">
    <original>T</original>
    <variation>A</variation>
    <location>
        <position position="255"/>
    </location>
</feature>
<feature type="mutagenesis site" description="Moderate loss of activity." evidence="8">
    <original>T</original>
    <variation>A</variation>
    <location>
        <position position="258"/>
    </location>
</feature>
<feature type="mutagenesis site" description="Loss of activity." evidence="8">
    <original>K</original>
    <variation>R</variation>
    <location>
        <position position="296"/>
    </location>
</feature>
<feature type="mutagenesis site" description="Significant loss of activity and impairs autophosphorylation of T-451." evidence="10">
    <original>T</original>
    <variation>A</variation>
    <location>
        <position position="446"/>
    </location>
</feature>
<feature type="mutagenesis site" description="Loss of activity." evidence="10">
    <original>T</original>
    <variation>A</variation>
    <location>
        <position position="451"/>
    </location>
</feature>
<feature type="mutagenesis site" description="15-fold decrease in K3L binding affinity and thus resistance of mutated PKR to K3L inhibition." evidence="28">
    <original>D</original>
    <variation>V</variation>
    <location>
        <position position="486"/>
    </location>
</feature>
<feature type="mutagenesis site" description="Loss of PKR inhibition by HCMV protein TRS1." evidence="53">
    <original>F</original>
    <variation>S</variation>
    <location>
        <position position="489"/>
    </location>
</feature>
<feature type="mutagenesis site" description="No effect on PKR inhibition by HCMV protein TRS1." evidence="53">
    <original>T</original>
    <variation>K</variation>
    <location>
        <position position="496"/>
    </location>
</feature>
<feature type="mutagenesis site" description="No effect on PKR inhibition by HCMV protein TRS1." evidence="53">
    <original>I</original>
    <variation>T</variation>
    <location>
        <position position="502"/>
    </location>
</feature>
<feature type="mutagenesis site" description="No effect on PKR inhibition by HCMV protein TRS1." evidence="53">
    <original>K</original>
    <variation>R</variation>
    <location>
        <position position="510"/>
    </location>
</feature>
<feature type="mutagenesis site" description="No effect on PKR inhibition by HCMV protein TRS1." evidence="53">
    <original>Q</original>
    <variation>E</variation>
    <location>
        <position position="516"/>
    </location>
</feature>
<feature type="sequence conflict" description="In Ref. 7; AAP57628." evidence="70" ref="7">
    <original>I</original>
    <variation>M</variation>
    <location>
        <position position="102"/>
    </location>
</feature>
<feature type="sequence conflict" description="In Ref. 7; AAP57628." evidence="70" ref="7">
    <original>S</original>
    <variation>R</variation>
    <location>
        <position position="224"/>
    </location>
</feature>
<feature type="sequence conflict" description="In Ref. 6; AAF13156." evidence="70" ref="6">
    <original>K</original>
    <variation>E</variation>
    <location>
        <position position="512"/>
    </location>
</feature>
<feature type="strand" evidence="85">
    <location>
        <begin position="5"/>
        <end position="7"/>
    </location>
</feature>
<feature type="helix" evidence="85">
    <location>
        <begin position="10"/>
        <end position="21"/>
    </location>
</feature>
<feature type="strand" evidence="85">
    <location>
        <begin position="26"/>
        <end position="32"/>
    </location>
</feature>
<feature type="turn" evidence="85">
    <location>
        <begin position="35"/>
        <end position="37"/>
    </location>
</feature>
<feature type="strand" evidence="85">
    <location>
        <begin position="41"/>
        <end position="50"/>
    </location>
</feature>
<feature type="strand" evidence="85">
    <location>
        <begin position="54"/>
        <end position="56"/>
    </location>
</feature>
<feature type="helix" evidence="85">
    <location>
        <begin position="61"/>
        <end position="76"/>
    </location>
</feature>
<feature type="helix" evidence="85">
    <location>
        <begin position="102"/>
        <end position="111"/>
    </location>
</feature>
<feature type="strand" evidence="85">
    <location>
        <begin position="115"/>
        <end position="123"/>
    </location>
</feature>
<feature type="strand" evidence="85">
    <location>
        <begin position="125"/>
        <end position="138"/>
    </location>
</feature>
<feature type="strand" evidence="85">
    <location>
        <begin position="144"/>
        <end position="149"/>
    </location>
</feature>
<feature type="helix" evidence="85">
    <location>
        <begin position="150"/>
        <end position="167"/>
    </location>
</feature>
<feature type="helix" evidence="86">
    <location>
        <begin position="261"/>
        <end position="266"/>
    </location>
</feature>
<feature type="strand" evidence="86">
    <location>
        <begin position="267"/>
        <end position="274"/>
    </location>
</feature>
<feature type="strand" evidence="86">
    <location>
        <begin position="276"/>
        <end position="278"/>
    </location>
</feature>
<feature type="strand" evidence="86">
    <location>
        <begin position="281"/>
        <end position="286"/>
    </location>
</feature>
<feature type="turn" evidence="86">
    <location>
        <begin position="287"/>
        <end position="289"/>
    </location>
</feature>
<feature type="strand" evidence="86">
    <location>
        <begin position="292"/>
        <end position="299"/>
    </location>
</feature>
<feature type="helix" evidence="86">
    <location>
        <begin position="303"/>
        <end position="305"/>
    </location>
</feature>
<feature type="helix" evidence="86">
    <location>
        <begin position="306"/>
        <end position="314"/>
    </location>
</feature>
<feature type="strand" evidence="86">
    <location>
        <begin position="323"/>
        <end position="332"/>
    </location>
</feature>
<feature type="strand" evidence="86">
    <location>
        <begin position="358"/>
        <end position="366"/>
    </location>
</feature>
<feature type="helix" evidence="86">
    <location>
        <begin position="374"/>
        <end position="380"/>
    </location>
</feature>
<feature type="helix" evidence="86">
    <location>
        <begin position="381"/>
        <end position="383"/>
    </location>
</feature>
<feature type="helix" evidence="86">
    <location>
        <begin position="388"/>
        <end position="407"/>
    </location>
</feature>
<feature type="strand" evidence="87">
    <location>
        <begin position="410"/>
        <end position="412"/>
    </location>
</feature>
<feature type="helix" evidence="86">
    <location>
        <begin position="417"/>
        <end position="419"/>
    </location>
</feature>
<feature type="strand" evidence="86">
    <location>
        <begin position="420"/>
        <end position="424"/>
    </location>
</feature>
<feature type="strand" evidence="86">
    <location>
        <begin position="427"/>
        <end position="430"/>
    </location>
</feature>
<feature type="helix" evidence="89">
    <location>
        <begin position="433"/>
        <end position="435"/>
    </location>
</feature>
<feature type="strand" evidence="86">
    <location>
        <begin position="437"/>
        <end position="440"/>
    </location>
</feature>
<feature type="helix" evidence="86">
    <location>
        <begin position="457"/>
        <end position="461"/>
    </location>
</feature>
<feature type="helix" evidence="86">
    <location>
        <begin position="468"/>
        <end position="482"/>
    </location>
</feature>
<feature type="helix" evidence="86">
    <location>
        <begin position="488"/>
        <end position="499"/>
    </location>
</feature>
<feature type="strand" evidence="88">
    <location>
        <begin position="505"/>
        <end position="507"/>
    </location>
</feature>
<feature type="helix" evidence="86">
    <location>
        <begin position="509"/>
        <end position="518"/>
    </location>
</feature>
<feature type="helix" evidence="86">
    <location>
        <begin position="523"/>
        <end position="525"/>
    </location>
</feature>
<feature type="helix" evidence="86">
    <location>
        <begin position="529"/>
        <end position="539"/>
    </location>
</feature>
<dbReference type="EC" id="2.7.11.1"/>
<dbReference type="EC" id="2.7.10.2"/>
<dbReference type="EMBL" id="M35663">
    <property type="protein sequence ID" value="AAA36409.1"/>
    <property type="molecule type" value="mRNA"/>
</dbReference>
<dbReference type="EMBL" id="M85294">
    <property type="protein sequence ID" value="AAA18253.1"/>
    <property type="molecule type" value="mRNA"/>
</dbReference>
<dbReference type="EMBL" id="U50648">
    <property type="protein sequence ID" value="AAC50768.1"/>
    <property type="molecule type" value="Genomic_DNA"/>
</dbReference>
<dbReference type="EMBL" id="U50634">
    <property type="protein sequence ID" value="AAC50768.1"/>
    <property type="status" value="JOINED"/>
    <property type="molecule type" value="Genomic_DNA"/>
</dbReference>
<dbReference type="EMBL" id="U50635">
    <property type="protein sequence ID" value="AAC50768.1"/>
    <property type="status" value="JOINED"/>
    <property type="molecule type" value="Genomic_DNA"/>
</dbReference>
<dbReference type="EMBL" id="U50636">
    <property type="protein sequence ID" value="AAC50768.1"/>
    <property type="status" value="JOINED"/>
    <property type="molecule type" value="Genomic_DNA"/>
</dbReference>
<dbReference type="EMBL" id="U50637">
    <property type="protein sequence ID" value="AAC50768.1"/>
    <property type="status" value="JOINED"/>
    <property type="molecule type" value="Genomic_DNA"/>
</dbReference>
<dbReference type="EMBL" id="U50638">
    <property type="protein sequence ID" value="AAC50768.1"/>
    <property type="status" value="JOINED"/>
    <property type="molecule type" value="Genomic_DNA"/>
</dbReference>
<dbReference type="EMBL" id="U50639">
    <property type="protein sequence ID" value="AAC50768.1"/>
    <property type="status" value="JOINED"/>
    <property type="molecule type" value="Genomic_DNA"/>
</dbReference>
<dbReference type="EMBL" id="U50640">
    <property type="protein sequence ID" value="AAC50768.1"/>
    <property type="status" value="JOINED"/>
    <property type="molecule type" value="Genomic_DNA"/>
</dbReference>
<dbReference type="EMBL" id="U50641">
    <property type="protein sequence ID" value="AAC50768.1"/>
    <property type="status" value="JOINED"/>
    <property type="molecule type" value="Genomic_DNA"/>
</dbReference>
<dbReference type="EMBL" id="U50642">
    <property type="protein sequence ID" value="AAC50768.1"/>
    <property type="status" value="JOINED"/>
    <property type="molecule type" value="Genomic_DNA"/>
</dbReference>
<dbReference type="EMBL" id="U50643">
    <property type="protein sequence ID" value="AAC50768.1"/>
    <property type="status" value="JOINED"/>
    <property type="molecule type" value="Genomic_DNA"/>
</dbReference>
<dbReference type="EMBL" id="U50644">
    <property type="protein sequence ID" value="AAC50768.1"/>
    <property type="status" value="JOINED"/>
    <property type="molecule type" value="Genomic_DNA"/>
</dbReference>
<dbReference type="EMBL" id="U50645">
    <property type="protein sequence ID" value="AAC50768.1"/>
    <property type="status" value="JOINED"/>
    <property type="molecule type" value="Genomic_DNA"/>
</dbReference>
<dbReference type="EMBL" id="U50646">
    <property type="protein sequence ID" value="AAC50768.1"/>
    <property type="status" value="JOINED"/>
    <property type="molecule type" value="Genomic_DNA"/>
</dbReference>
<dbReference type="EMBL" id="U50647">
    <property type="protein sequence ID" value="AAC50768.1"/>
    <property type="status" value="JOINED"/>
    <property type="molecule type" value="Genomic_DNA"/>
</dbReference>
<dbReference type="EMBL" id="AF167472">
    <property type="protein sequence ID" value="AAF13156.1"/>
    <property type="molecule type" value="Genomic_DNA"/>
</dbReference>
<dbReference type="EMBL" id="AF167460">
    <property type="protein sequence ID" value="AAF13156.1"/>
    <property type="status" value="JOINED"/>
    <property type="molecule type" value="Genomic_DNA"/>
</dbReference>
<dbReference type="EMBL" id="AF167462">
    <property type="protein sequence ID" value="AAF13156.1"/>
    <property type="status" value="JOINED"/>
    <property type="molecule type" value="Genomic_DNA"/>
</dbReference>
<dbReference type="EMBL" id="AF167463">
    <property type="protein sequence ID" value="AAF13156.1"/>
    <property type="status" value="JOINED"/>
    <property type="molecule type" value="Genomic_DNA"/>
</dbReference>
<dbReference type="EMBL" id="AF167464">
    <property type="protein sequence ID" value="AAF13156.1"/>
    <property type="status" value="JOINED"/>
    <property type="molecule type" value="Genomic_DNA"/>
</dbReference>
<dbReference type="EMBL" id="AF167465">
    <property type="protein sequence ID" value="AAF13156.1"/>
    <property type="status" value="JOINED"/>
    <property type="molecule type" value="Genomic_DNA"/>
</dbReference>
<dbReference type="EMBL" id="AF167466">
    <property type="protein sequence ID" value="AAF13156.1"/>
    <property type="status" value="JOINED"/>
    <property type="molecule type" value="Genomic_DNA"/>
</dbReference>
<dbReference type="EMBL" id="AF167468">
    <property type="protein sequence ID" value="AAF13156.1"/>
    <property type="status" value="JOINED"/>
    <property type="molecule type" value="Genomic_DNA"/>
</dbReference>
<dbReference type="EMBL" id="AF167470">
    <property type="protein sequence ID" value="AAF13156.1"/>
    <property type="status" value="JOINED"/>
    <property type="molecule type" value="Genomic_DNA"/>
</dbReference>
<dbReference type="EMBL" id="AY302136">
    <property type="protein sequence ID" value="AAP57628.1"/>
    <property type="molecule type" value="mRNA"/>
</dbReference>
<dbReference type="EMBL" id="AK290655">
    <property type="protein sequence ID" value="BAF83344.1"/>
    <property type="molecule type" value="mRNA"/>
</dbReference>
<dbReference type="EMBL" id="AK313818">
    <property type="protein sequence ID" value="BAG36554.1"/>
    <property type="molecule type" value="mRNA"/>
</dbReference>
<dbReference type="EMBL" id="AY228338">
    <property type="protein sequence ID" value="AAO38055.1"/>
    <property type="molecule type" value="Genomic_DNA"/>
</dbReference>
<dbReference type="EMBL" id="AC007899">
    <property type="protein sequence ID" value="AAY24317.1"/>
    <property type="molecule type" value="Genomic_DNA"/>
</dbReference>
<dbReference type="EMBL" id="CH471053">
    <property type="protein sequence ID" value="EAX00407.1"/>
    <property type="molecule type" value="Genomic_DNA"/>
</dbReference>
<dbReference type="EMBL" id="CH471053">
    <property type="protein sequence ID" value="EAX00408.1"/>
    <property type="molecule type" value="Genomic_DNA"/>
</dbReference>
<dbReference type="EMBL" id="CH471053">
    <property type="protein sequence ID" value="EAX00409.1"/>
    <property type="molecule type" value="Genomic_DNA"/>
</dbReference>
<dbReference type="EMBL" id="BC093676">
    <property type="protein sequence ID" value="AAH93676.1"/>
    <property type="molecule type" value="mRNA"/>
</dbReference>
<dbReference type="EMBL" id="BC101475">
    <property type="protein sequence ID" value="AAI01476.1"/>
    <property type="molecule type" value="mRNA"/>
</dbReference>
<dbReference type="CCDS" id="CCDS1786.1">
    <molecule id="P19525-1"/>
</dbReference>
<dbReference type="CCDS" id="CCDS46259.1">
    <molecule id="P19525-2"/>
</dbReference>
<dbReference type="PIR" id="JC5225">
    <property type="entry name" value="JC5225"/>
</dbReference>
<dbReference type="RefSeq" id="NP_001129123.1">
    <molecule id="P19525-1"/>
    <property type="nucleotide sequence ID" value="NM_001135651.3"/>
</dbReference>
<dbReference type="RefSeq" id="NP_001129124.1">
    <molecule id="P19525-2"/>
    <property type="nucleotide sequence ID" value="NM_001135652.2"/>
</dbReference>
<dbReference type="RefSeq" id="NP_002750.1">
    <molecule id="P19525-1"/>
    <property type="nucleotide sequence ID" value="NM_002759.4"/>
</dbReference>
<dbReference type="RefSeq" id="XP_011531289.1">
    <molecule id="P19525-1"/>
    <property type="nucleotide sequence ID" value="XM_011532987.3"/>
</dbReference>
<dbReference type="RefSeq" id="XP_054198993.1">
    <molecule id="P19525-1"/>
    <property type="nucleotide sequence ID" value="XM_054343018.1"/>
</dbReference>
<dbReference type="PDB" id="1QU6">
    <property type="method" value="NMR"/>
    <property type="chains" value="A=1-170"/>
</dbReference>
<dbReference type="PDB" id="2A19">
    <property type="method" value="X-ray"/>
    <property type="resolution" value="2.50 A"/>
    <property type="chains" value="B/C=258-550"/>
</dbReference>
<dbReference type="PDB" id="2A1A">
    <property type="method" value="X-ray"/>
    <property type="resolution" value="2.80 A"/>
    <property type="chains" value="B=258-550"/>
</dbReference>
<dbReference type="PDB" id="3UIU">
    <property type="method" value="X-ray"/>
    <property type="resolution" value="2.90 A"/>
    <property type="chains" value="A/B=254-551"/>
</dbReference>
<dbReference type="PDB" id="6D3K">
    <property type="method" value="X-ray"/>
    <property type="resolution" value="2.60 A"/>
    <property type="chains" value="A/B/C=229-551"/>
</dbReference>
<dbReference type="PDB" id="6D3L">
    <property type="method" value="X-ray"/>
    <property type="resolution" value="3.10 A"/>
    <property type="chains" value="A=229-551"/>
</dbReference>
<dbReference type="PDB" id="7OBK">
    <property type="method" value="X-ray"/>
    <property type="resolution" value="1.80 A"/>
    <property type="chains" value="B=541-551"/>
</dbReference>
<dbReference type="PDB" id="7OBL">
    <property type="method" value="X-ray"/>
    <property type="resolution" value="1.80 A"/>
    <property type="chains" value="B=541-551"/>
</dbReference>
<dbReference type="PDB" id="8BI7">
    <property type="method" value="X-ray"/>
    <property type="resolution" value="1.40 A"/>
    <property type="chains" value="B=541-551"/>
</dbReference>
<dbReference type="PDB" id="8I9J">
    <property type="method" value="EM"/>
    <property type="resolution" value="6.39 A"/>
    <property type="chains" value="A=1-170"/>
</dbReference>
<dbReference type="PDB" id="8IZN">
    <property type="method" value="EM"/>
    <property type="resolution" value="6.67 A"/>
    <property type="chains" value="A=1-170"/>
</dbReference>
<dbReference type="PDBsum" id="1QU6"/>
<dbReference type="PDBsum" id="2A19"/>
<dbReference type="PDBsum" id="2A1A"/>
<dbReference type="PDBsum" id="3UIU"/>
<dbReference type="PDBsum" id="6D3K"/>
<dbReference type="PDBsum" id="6D3L"/>
<dbReference type="PDBsum" id="7OBK"/>
<dbReference type="PDBsum" id="7OBL"/>
<dbReference type="PDBsum" id="8BI7"/>
<dbReference type="PDBsum" id="8I9J"/>
<dbReference type="PDBsum" id="8IZN"/>
<dbReference type="BMRB" id="P19525"/>
<dbReference type="EMDB" id="EMD-35274"/>
<dbReference type="EMDB" id="EMD-35866"/>
<dbReference type="SMR" id="P19525"/>
<dbReference type="BioGRID" id="111596">
    <property type="interactions" value="393"/>
</dbReference>
<dbReference type="DIP" id="DIP-2657N"/>
<dbReference type="FunCoup" id="P19525">
    <property type="interactions" value="998"/>
</dbReference>
<dbReference type="IntAct" id="P19525">
    <property type="interactions" value="169"/>
</dbReference>
<dbReference type="MINT" id="P19525"/>
<dbReference type="STRING" id="9606.ENSP00000233057"/>
<dbReference type="BindingDB" id="P19525"/>
<dbReference type="ChEMBL" id="CHEMBL5785"/>
<dbReference type="DrugBank" id="DB12010">
    <property type="generic name" value="Fostamatinib"/>
</dbReference>
<dbReference type="DrugBank" id="DB07995">
    <property type="generic name" value="H-89"/>
</dbReference>
<dbReference type="DrugBank" id="DB00328">
    <property type="generic name" value="Indomethacin"/>
</dbReference>
<dbReference type="DrugCentral" id="P19525"/>
<dbReference type="GuidetoPHARMACOLOGY" id="2016"/>
<dbReference type="GlyGen" id="P19525">
    <property type="glycosylation" value="2 sites, 1 N-linked glycan (1 site), 1 O-linked glycan (1 site)"/>
</dbReference>
<dbReference type="iPTMnet" id="P19525"/>
<dbReference type="PhosphoSitePlus" id="P19525"/>
<dbReference type="SwissPalm" id="P19525"/>
<dbReference type="BioMuta" id="EIF2AK2"/>
<dbReference type="DMDM" id="125527"/>
<dbReference type="jPOST" id="P19525"/>
<dbReference type="MassIVE" id="P19525"/>
<dbReference type="PaxDb" id="9606-ENSP00000233057"/>
<dbReference type="PeptideAtlas" id="P19525"/>
<dbReference type="ProteomicsDB" id="19391"/>
<dbReference type="ProteomicsDB" id="53670">
    <molecule id="P19525-1"/>
</dbReference>
<dbReference type="Pumba" id="P19525"/>
<dbReference type="TopDownProteomics" id="P19525-1">
    <molecule id="P19525-1"/>
</dbReference>
<dbReference type="Antibodypedia" id="3548">
    <property type="antibodies" value="1189 antibodies from 43 providers"/>
</dbReference>
<dbReference type="DNASU" id="5610"/>
<dbReference type="Ensembl" id="ENST00000233057.9">
    <molecule id="P19525-1"/>
    <property type="protein sequence ID" value="ENSP00000233057.4"/>
    <property type="gene ID" value="ENSG00000055332.19"/>
</dbReference>
<dbReference type="Ensembl" id="ENST00000395127.6">
    <molecule id="P19525-1"/>
    <property type="protein sequence ID" value="ENSP00000378559.2"/>
    <property type="gene ID" value="ENSG00000055332.19"/>
</dbReference>
<dbReference type="Ensembl" id="ENST00000405334.5">
    <molecule id="P19525-2"/>
    <property type="protein sequence ID" value="ENSP00000385014.1"/>
    <property type="gene ID" value="ENSG00000055332.19"/>
</dbReference>
<dbReference type="Ensembl" id="ENST00000647926.1">
    <molecule id="P19525-1"/>
    <property type="protein sequence ID" value="ENSP00000497534.1"/>
    <property type="gene ID" value="ENSG00000055332.19"/>
</dbReference>
<dbReference type="Ensembl" id="ENST00000679507.1">
    <molecule id="P19525-1"/>
    <property type="protein sequence ID" value="ENSP00000506024.1"/>
    <property type="gene ID" value="ENSG00000055332.19"/>
</dbReference>
<dbReference type="Ensembl" id="ENST00000681463.1">
    <molecule id="P19525-1"/>
    <property type="protein sequence ID" value="ENSP00000505138.1"/>
    <property type="gene ID" value="ENSG00000055332.19"/>
</dbReference>
<dbReference type="Ensembl" id="ENST00000681507.1">
    <molecule id="P19525-1"/>
    <property type="protein sequence ID" value="ENSP00000505772.1"/>
    <property type="gene ID" value="ENSG00000055332.19"/>
</dbReference>
<dbReference type="GeneID" id="5610"/>
<dbReference type="KEGG" id="hsa:5610"/>
<dbReference type="MANE-Select" id="ENST00000233057.9">
    <property type="protein sequence ID" value="ENSP00000233057.4"/>
    <property type="RefSeq nucleotide sequence ID" value="NM_001135651.3"/>
    <property type="RefSeq protein sequence ID" value="NP_001129123.1"/>
</dbReference>
<dbReference type="UCSC" id="uc010fab.3">
    <molecule id="P19525-1"/>
    <property type="organism name" value="human"/>
</dbReference>
<dbReference type="AGR" id="HGNC:9437"/>
<dbReference type="CTD" id="5610"/>
<dbReference type="DisGeNET" id="5610"/>
<dbReference type="GeneCards" id="EIF2AK2"/>
<dbReference type="HGNC" id="HGNC:9437">
    <property type="gene designation" value="EIF2AK2"/>
</dbReference>
<dbReference type="HPA" id="ENSG00000055332">
    <property type="expression patterns" value="Low tissue specificity"/>
</dbReference>
<dbReference type="MalaCards" id="EIF2AK2"/>
<dbReference type="MIM" id="176871">
    <property type="type" value="gene"/>
</dbReference>
<dbReference type="MIM" id="618877">
    <property type="type" value="phenotype"/>
</dbReference>
<dbReference type="MIM" id="619687">
    <property type="type" value="phenotype"/>
</dbReference>
<dbReference type="neXtProt" id="NX_P19525"/>
<dbReference type="OpenTargets" id="ENSG00000055332"/>
<dbReference type="Orphanet" id="256">
    <property type="disease" value="Early-onset generalized limb-onset dystonia"/>
</dbReference>
<dbReference type="PharmGKB" id="PA33779"/>
<dbReference type="VEuPathDB" id="HostDB:ENSG00000055332"/>
<dbReference type="eggNOG" id="KOG1033">
    <property type="taxonomic scope" value="Eukaryota"/>
</dbReference>
<dbReference type="GeneTree" id="ENSGT00940000160736"/>
<dbReference type="HOGENOM" id="CLU_023682_1_0_1"/>
<dbReference type="InParanoid" id="P19525"/>
<dbReference type="OMA" id="KIACEMM"/>
<dbReference type="OrthoDB" id="341578at2759"/>
<dbReference type="PAN-GO" id="P19525">
    <property type="GO annotations" value="2 GO annotations based on evolutionary models"/>
</dbReference>
<dbReference type="PhylomeDB" id="P19525"/>
<dbReference type="TreeFam" id="TF317576"/>
<dbReference type="PathwayCommons" id="P19525"/>
<dbReference type="Reactome" id="R-HSA-1169408">
    <property type="pathway name" value="ISG15 antiviral mechanism"/>
</dbReference>
<dbReference type="Reactome" id="R-HSA-169131">
    <property type="pathway name" value="Inhibition of PKR"/>
</dbReference>
<dbReference type="Reactome" id="R-HSA-4755510">
    <property type="pathway name" value="SUMOylation of immune response proteins"/>
</dbReference>
<dbReference type="Reactome" id="R-HSA-909733">
    <property type="pathway name" value="Interferon alpha/beta signaling"/>
</dbReference>
<dbReference type="Reactome" id="R-HSA-9833109">
    <property type="pathway name" value="Evasion by RSV of host interferon responses"/>
</dbReference>
<dbReference type="Reactome" id="R-HSA-9833482">
    <property type="pathway name" value="PKR-mediated signaling"/>
</dbReference>
<dbReference type="SignaLink" id="P19525"/>
<dbReference type="SIGNOR" id="P19525"/>
<dbReference type="BioGRID-ORCS" id="5610">
    <property type="hits" value="13 hits in 1193 CRISPR screens"/>
</dbReference>
<dbReference type="CD-CODE" id="91857CE7">
    <property type="entry name" value="Nucleolus"/>
</dbReference>
<dbReference type="CD-CODE" id="DEE660B4">
    <property type="entry name" value="Stress granule"/>
</dbReference>
<dbReference type="CD-CODE" id="FB4E32DD">
    <property type="entry name" value="Presynaptic clusters and postsynaptic densities"/>
</dbReference>
<dbReference type="ChiTaRS" id="EIF2AK2">
    <property type="organism name" value="human"/>
</dbReference>
<dbReference type="EvolutionaryTrace" id="P19525"/>
<dbReference type="GeneWiki" id="Protein_kinase_R"/>
<dbReference type="GenomeRNAi" id="5610"/>
<dbReference type="Pharos" id="P19525">
    <property type="development level" value="Tchem"/>
</dbReference>
<dbReference type="PRO" id="PR:P19525"/>
<dbReference type="Proteomes" id="UP000005640">
    <property type="component" value="Chromosome 2"/>
</dbReference>
<dbReference type="RNAct" id="P19525">
    <property type="molecule type" value="protein"/>
</dbReference>
<dbReference type="Bgee" id="ENSG00000055332">
    <property type="expression patterns" value="Expressed in endometrium epithelium and 211 other cell types or tissues"/>
</dbReference>
<dbReference type="GO" id="GO:0005737">
    <property type="term" value="C:cytoplasm"/>
    <property type="evidence" value="ECO:0000314"/>
    <property type="project" value="UniProtKB"/>
</dbReference>
<dbReference type="GO" id="GO:0005829">
    <property type="term" value="C:cytosol"/>
    <property type="evidence" value="ECO:0000314"/>
    <property type="project" value="HPA"/>
</dbReference>
<dbReference type="GO" id="GO:0016020">
    <property type="term" value="C:membrane"/>
    <property type="evidence" value="ECO:0007005"/>
    <property type="project" value="UniProtKB"/>
</dbReference>
<dbReference type="GO" id="GO:0005654">
    <property type="term" value="C:nucleoplasm"/>
    <property type="evidence" value="ECO:0000304"/>
    <property type="project" value="Reactome"/>
</dbReference>
<dbReference type="GO" id="GO:0005634">
    <property type="term" value="C:nucleus"/>
    <property type="evidence" value="ECO:0000318"/>
    <property type="project" value="GO_Central"/>
</dbReference>
<dbReference type="GO" id="GO:0048471">
    <property type="term" value="C:perinuclear region of cytoplasm"/>
    <property type="evidence" value="ECO:0000314"/>
    <property type="project" value="UniProtKB"/>
</dbReference>
<dbReference type="GO" id="GO:0005840">
    <property type="term" value="C:ribosome"/>
    <property type="evidence" value="ECO:0000304"/>
    <property type="project" value="AgBase"/>
</dbReference>
<dbReference type="GO" id="GO:0005524">
    <property type="term" value="F:ATP binding"/>
    <property type="evidence" value="ECO:0007669"/>
    <property type="project" value="UniProtKB-KW"/>
</dbReference>
<dbReference type="GO" id="GO:0003725">
    <property type="term" value="F:double-stranded RNA binding"/>
    <property type="evidence" value="ECO:0000314"/>
    <property type="project" value="MGI"/>
</dbReference>
<dbReference type="GO" id="GO:0004694">
    <property type="term" value="F:eukaryotic translation initiation factor 2alpha kinase activity"/>
    <property type="evidence" value="ECO:0000315"/>
    <property type="project" value="UniProtKB"/>
</dbReference>
<dbReference type="GO" id="GO:0042802">
    <property type="term" value="F:identical protein binding"/>
    <property type="evidence" value="ECO:0000353"/>
    <property type="project" value="IntAct"/>
</dbReference>
<dbReference type="GO" id="GO:0016301">
    <property type="term" value="F:kinase activity"/>
    <property type="evidence" value="ECO:0000314"/>
    <property type="project" value="UniProt"/>
</dbReference>
<dbReference type="GO" id="GO:0004715">
    <property type="term" value="F:non-membrane spanning protein tyrosine kinase activity"/>
    <property type="evidence" value="ECO:0007669"/>
    <property type="project" value="UniProtKB-EC"/>
</dbReference>
<dbReference type="GO" id="GO:0004672">
    <property type="term" value="F:protein kinase activity"/>
    <property type="evidence" value="ECO:0000314"/>
    <property type="project" value="UniProtKB"/>
</dbReference>
<dbReference type="GO" id="GO:0019888">
    <property type="term" value="F:protein phosphatase regulator activity"/>
    <property type="evidence" value="ECO:0000304"/>
    <property type="project" value="ProtInc"/>
</dbReference>
<dbReference type="GO" id="GO:0106310">
    <property type="term" value="F:protein serine kinase activity"/>
    <property type="evidence" value="ECO:0007669"/>
    <property type="project" value="RHEA"/>
</dbReference>
<dbReference type="GO" id="GO:0004674">
    <property type="term" value="F:protein serine/threonine kinase activity"/>
    <property type="evidence" value="ECO:0000304"/>
    <property type="project" value="ProtInc"/>
</dbReference>
<dbReference type="GO" id="GO:0003723">
    <property type="term" value="F:RNA binding"/>
    <property type="evidence" value="ECO:0007005"/>
    <property type="project" value="UniProtKB"/>
</dbReference>
<dbReference type="GO" id="GO:0140374">
    <property type="term" value="P:antiviral innate immune response"/>
    <property type="evidence" value="ECO:0000314"/>
    <property type="project" value="UniProt"/>
</dbReference>
<dbReference type="GO" id="GO:0034198">
    <property type="term" value="P:cellular response to amino acid starvation"/>
    <property type="evidence" value="ECO:0000315"/>
    <property type="project" value="UniProtKB"/>
</dbReference>
<dbReference type="GO" id="GO:0051607">
    <property type="term" value="P:defense response to virus"/>
    <property type="evidence" value="ECO:0000270"/>
    <property type="project" value="ARUK-UCL"/>
</dbReference>
<dbReference type="GO" id="GO:0030968">
    <property type="term" value="P:endoplasmic reticulum unfolded protein response"/>
    <property type="evidence" value="ECO:0007669"/>
    <property type="project" value="Ensembl"/>
</dbReference>
<dbReference type="GO" id="GO:0043066">
    <property type="term" value="P:negative regulation of apoptotic process"/>
    <property type="evidence" value="ECO:0007669"/>
    <property type="project" value="Ensembl"/>
</dbReference>
<dbReference type="GO" id="GO:0008285">
    <property type="term" value="P:negative regulation of cell population proliferation"/>
    <property type="evidence" value="ECO:0000304"/>
    <property type="project" value="ProtInc"/>
</dbReference>
<dbReference type="GO" id="GO:0033689">
    <property type="term" value="P:negative regulation of osteoblast proliferation"/>
    <property type="evidence" value="ECO:0000315"/>
    <property type="project" value="UniProtKB"/>
</dbReference>
<dbReference type="GO" id="GO:0017148">
    <property type="term" value="P:negative regulation of translation"/>
    <property type="evidence" value="ECO:0000314"/>
    <property type="project" value="UniProtKB"/>
</dbReference>
<dbReference type="GO" id="GO:0045071">
    <property type="term" value="P:negative regulation of viral genome replication"/>
    <property type="evidence" value="ECO:0000315"/>
    <property type="project" value="UniProtKB"/>
</dbReference>
<dbReference type="GO" id="GO:0032722">
    <property type="term" value="P:positive regulation of chemokine production"/>
    <property type="evidence" value="ECO:0000250"/>
    <property type="project" value="UniProtKB"/>
</dbReference>
<dbReference type="GO" id="GO:0001819">
    <property type="term" value="P:positive regulation of cytokine production"/>
    <property type="evidence" value="ECO:0000250"/>
    <property type="project" value="UniProtKB"/>
</dbReference>
<dbReference type="GO" id="GO:0043410">
    <property type="term" value="P:positive regulation of MAPK cascade"/>
    <property type="evidence" value="ECO:0000315"/>
    <property type="project" value="UniProtKB"/>
</dbReference>
<dbReference type="GO" id="GO:0051092">
    <property type="term" value="P:positive regulation of NF-kappaB transcription factor activity"/>
    <property type="evidence" value="ECO:0000314"/>
    <property type="project" value="UniProtKB"/>
</dbReference>
<dbReference type="GO" id="GO:1901224">
    <property type="term" value="P:positive regulation of non-canonical NF-kappaB signal transduction"/>
    <property type="evidence" value="ECO:0000250"/>
    <property type="project" value="UniProtKB"/>
</dbReference>
<dbReference type="GO" id="GO:0032874">
    <property type="term" value="P:positive regulation of stress-activated MAPK cascade"/>
    <property type="evidence" value="ECO:0000250"/>
    <property type="project" value="UniProtKB"/>
</dbReference>
<dbReference type="GO" id="GO:0046777">
    <property type="term" value="P:protein autophosphorylation"/>
    <property type="evidence" value="ECO:0000314"/>
    <property type="project" value="UniProtKB"/>
</dbReference>
<dbReference type="GO" id="GO:0006468">
    <property type="term" value="P:protein phosphorylation"/>
    <property type="evidence" value="ECO:0000314"/>
    <property type="project" value="UniProtKB"/>
</dbReference>
<dbReference type="GO" id="GO:1901532">
    <property type="term" value="P:regulation of hematopoietic progenitor cell differentiation"/>
    <property type="evidence" value="ECO:0000250"/>
    <property type="project" value="UniProtKB"/>
</dbReference>
<dbReference type="GO" id="GO:1902036">
    <property type="term" value="P:regulation of hematopoietic stem cell differentiation"/>
    <property type="evidence" value="ECO:0000250"/>
    <property type="project" value="UniProtKB"/>
</dbReference>
<dbReference type="GO" id="GO:1902033">
    <property type="term" value="P:regulation of hematopoietic stem cell proliferation"/>
    <property type="evidence" value="ECO:0000250"/>
    <property type="project" value="UniProtKB"/>
</dbReference>
<dbReference type="GO" id="GO:1900225">
    <property type="term" value="P:regulation of NLRP3 inflammasome complex assembly"/>
    <property type="evidence" value="ECO:0000250"/>
    <property type="project" value="UniProtKB"/>
</dbReference>
<dbReference type="GO" id="GO:0006446">
    <property type="term" value="P:regulation of translational initiation"/>
    <property type="evidence" value="ECO:0000318"/>
    <property type="project" value="GO_Central"/>
</dbReference>
<dbReference type="GO" id="GO:0035455">
    <property type="term" value="P:response to interferon-alpha"/>
    <property type="evidence" value="ECO:0000314"/>
    <property type="project" value="UniProtKB"/>
</dbReference>
<dbReference type="GO" id="GO:0009615">
    <property type="term" value="P:response to virus"/>
    <property type="evidence" value="ECO:0000315"/>
    <property type="project" value="UniProtKB"/>
</dbReference>
<dbReference type="GO" id="GO:0006412">
    <property type="term" value="P:translation"/>
    <property type="evidence" value="ECO:0007669"/>
    <property type="project" value="Ensembl"/>
</dbReference>
<dbReference type="CDD" id="cd19903">
    <property type="entry name" value="DSRM_EIF2AK2_rpt1"/>
    <property type="match status" value="1"/>
</dbReference>
<dbReference type="CDD" id="cd19904">
    <property type="entry name" value="DSRM_EIF2AK2_rpt2"/>
    <property type="match status" value="1"/>
</dbReference>
<dbReference type="CDD" id="cd14047">
    <property type="entry name" value="STKc_EIF2AK2_PKR"/>
    <property type="match status" value="1"/>
</dbReference>
<dbReference type="FunFam" id="3.30.160.20:FF:000045">
    <property type="entry name" value="Eukaryotic translation initiation factor 2-alpha kinase 2"/>
    <property type="match status" value="1"/>
</dbReference>
<dbReference type="FunFam" id="3.30.160.20:FF:000062">
    <property type="entry name" value="Eukaryotic translation initiation factor 2-alpha kinase 2"/>
    <property type="match status" value="1"/>
</dbReference>
<dbReference type="FunFam" id="3.30.200.20:FF:000536">
    <property type="entry name" value="Eukaryotic translation initiation factor 2-alpha kinase 2"/>
    <property type="match status" value="1"/>
</dbReference>
<dbReference type="FunFam" id="1.10.510.10:FF:000251">
    <property type="entry name" value="eukaryotic translation initiation factor 2-alpha kinase 3"/>
    <property type="match status" value="1"/>
</dbReference>
<dbReference type="Gene3D" id="3.30.160.20">
    <property type="match status" value="2"/>
</dbReference>
<dbReference type="Gene3D" id="3.30.200.20">
    <property type="entry name" value="Phosphorylase Kinase, domain 1"/>
    <property type="match status" value="1"/>
</dbReference>
<dbReference type="Gene3D" id="1.10.510.10">
    <property type="entry name" value="Transferase(Phosphotransferase) domain 1"/>
    <property type="match status" value="1"/>
</dbReference>
<dbReference type="IDEAL" id="IID00443"/>
<dbReference type="InterPro" id="IPR050339">
    <property type="entry name" value="CC_SR_Kinase"/>
</dbReference>
<dbReference type="InterPro" id="IPR014720">
    <property type="entry name" value="dsRBD_dom"/>
</dbReference>
<dbReference type="InterPro" id="IPR044452">
    <property type="entry name" value="EIF2AK2_DSRM_1"/>
</dbReference>
<dbReference type="InterPro" id="IPR044453">
    <property type="entry name" value="EIF2AK2_DSRM_2"/>
</dbReference>
<dbReference type="InterPro" id="IPR011009">
    <property type="entry name" value="Kinase-like_dom_sf"/>
</dbReference>
<dbReference type="InterPro" id="IPR000719">
    <property type="entry name" value="Prot_kinase_dom"/>
</dbReference>
<dbReference type="InterPro" id="IPR017441">
    <property type="entry name" value="Protein_kinase_ATP_BS"/>
</dbReference>
<dbReference type="InterPro" id="IPR008271">
    <property type="entry name" value="Ser/Thr_kinase_AS"/>
</dbReference>
<dbReference type="PANTHER" id="PTHR11042">
    <property type="entry name" value="EUKARYOTIC TRANSLATION INITIATION FACTOR 2-ALPHA KINASE EIF2-ALPHA KINASE -RELATED"/>
    <property type="match status" value="1"/>
</dbReference>
<dbReference type="PANTHER" id="PTHR11042:SF163">
    <property type="entry name" value="INTERFERON-INDUCED, DOUBLE-STRANDED RNA-ACTIVATED PROTEIN KINASE"/>
    <property type="match status" value="1"/>
</dbReference>
<dbReference type="Pfam" id="PF00035">
    <property type="entry name" value="dsrm"/>
    <property type="match status" value="2"/>
</dbReference>
<dbReference type="Pfam" id="PF00069">
    <property type="entry name" value="Pkinase"/>
    <property type="match status" value="1"/>
</dbReference>
<dbReference type="SMART" id="SM00358">
    <property type="entry name" value="DSRM"/>
    <property type="match status" value="2"/>
</dbReference>
<dbReference type="SMART" id="SM00220">
    <property type="entry name" value="S_TKc"/>
    <property type="match status" value="1"/>
</dbReference>
<dbReference type="SUPFAM" id="SSF54768">
    <property type="entry name" value="dsRNA-binding domain-like"/>
    <property type="match status" value="2"/>
</dbReference>
<dbReference type="SUPFAM" id="SSF56112">
    <property type="entry name" value="Protein kinase-like (PK-like)"/>
    <property type="match status" value="1"/>
</dbReference>
<dbReference type="PROSITE" id="PS50137">
    <property type="entry name" value="DS_RBD"/>
    <property type="match status" value="2"/>
</dbReference>
<dbReference type="PROSITE" id="PS00107">
    <property type="entry name" value="PROTEIN_KINASE_ATP"/>
    <property type="match status" value="1"/>
</dbReference>
<dbReference type="PROSITE" id="PS50011">
    <property type="entry name" value="PROTEIN_KINASE_DOM"/>
    <property type="match status" value="1"/>
</dbReference>
<dbReference type="PROSITE" id="PS00108">
    <property type="entry name" value="PROTEIN_KINASE_ST"/>
    <property type="match status" value="1"/>
</dbReference>
<gene>
    <name type="primary">EIF2AK2</name>
    <name type="synonym">PKR</name>
    <name type="synonym">PRKR</name>
</gene>